<accession>Q9QXS1</accession>
<accession>E9QN87</accession>
<accession>Q6S384</accession>
<accession>Q6S389</accession>
<accession>Q6S394</accession>
<accession>Q9CS65</accession>
<accession>Q9QUT2</accession>
<accession>Q9QXQ8</accession>
<accession>Q9QXQ9</accession>
<accession>Q9QXR0</accession>
<accession>Q9QXR1</accession>
<accession>Q9QXR2</accession>
<accession>Q9QXR3</accession>
<accession>Q9QXR4</accession>
<accession>Q9QXR5</accession>
<accession>Q9QXR6</accession>
<accession>Q9QXR7</accession>
<accession>Q9QXR8</accession>
<accession>Q9QXR9</accession>
<accession>Q9QXS0</accession>
<accession>Q9QXS2</accession>
<accession>Q9QXS3</accession>
<evidence type="ECO:0000250" key="1"/>
<evidence type="ECO:0000250" key="2">
    <source>
        <dbReference type="UniProtKB" id="P30427"/>
    </source>
</evidence>
<evidence type="ECO:0000250" key="3">
    <source>
        <dbReference type="UniProtKB" id="Q15149"/>
    </source>
</evidence>
<evidence type="ECO:0000250" key="4">
    <source>
        <dbReference type="UniProtKB" id="Q9JI55"/>
    </source>
</evidence>
<evidence type="ECO:0000255" key="5"/>
<evidence type="ECO:0000255" key="6">
    <source>
        <dbReference type="PROSITE-ProRule" id="PRU00044"/>
    </source>
</evidence>
<evidence type="ECO:0000255" key="7">
    <source>
        <dbReference type="PROSITE-ProRule" id="PRU00192"/>
    </source>
</evidence>
<evidence type="ECO:0000256" key="8">
    <source>
        <dbReference type="SAM" id="MobiDB-lite"/>
    </source>
</evidence>
<evidence type="ECO:0000269" key="9">
    <source>
    </source>
</evidence>
<evidence type="ECO:0000269" key="10">
    <source>
    </source>
</evidence>
<evidence type="ECO:0000269" key="11">
    <source>
    </source>
</evidence>
<evidence type="ECO:0000269" key="12">
    <source>
    </source>
</evidence>
<evidence type="ECO:0000269" key="13">
    <source>
    </source>
</evidence>
<evidence type="ECO:0000269" key="14">
    <source>
    </source>
</evidence>
<evidence type="ECO:0000269" key="15">
    <source>
    </source>
</evidence>
<evidence type="ECO:0000269" key="16">
    <source>
    </source>
</evidence>
<evidence type="ECO:0000269" key="17">
    <source>
    </source>
</evidence>
<evidence type="ECO:0000305" key="18"/>
<evidence type="ECO:0007744" key="19">
    <source>
    </source>
</evidence>
<evidence type="ECO:0007744" key="20">
    <source>
    </source>
</evidence>
<evidence type="ECO:0007744" key="21">
    <source>
    </source>
</evidence>
<evidence type="ECO:0007744" key="22">
    <source>
    </source>
</evidence>
<evidence type="ECO:0007744" key="23">
    <source>
    </source>
</evidence>
<evidence type="ECO:0007744" key="24">
    <source>
    </source>
</evidence>
<evidence type="ECO:0007744" key="25">
    <source>
    </source>
</evidence>
<evidence type="ECO:0007744" key="26">
    <source>
    </source>
</evidence>
<evidence type="ECO:0007744" key="27">
    <source>
    </source>
</evidence>
<evidence type="ECO:0007829" key="28">
    <source>
        <dbReference type="PDB" id="1SH5"/>
    </source>
</evidence>
<evidence type="ECO:0007829" key="29">
    <source>
        <dbReference type="PDB" id="4Q57"/>
    </source>
</evidence>
<proteinExistence type="evidence at protein level"/>
<reference key="1">
    <citation type="journal article" date="2004" name="Genome Res.">
        <title>Multiple variable first exons: a mechanism for cell- and tissue-specific gene regulation.</title>
        <authorList>
            <person name="Zhang T."/>
            <person name="Haws P."/>
            <person name="Wu Q."/>
        </authorList>
    </citation>
    <scope>NUCLEOTIDE SEQUENCE [MRNA]</scope>
    <scope>ALTERNATIVE SPLICING</scope>
</reference>
<reference key="2">
    <citation type="journal article" date="2009" name="PLoS Biol.">
        <title>Lineage-specific biology revealed by a finished genome assembly of the mouse.</title>
        <authorList>
            <person name="Church D.M."/>
            <person name="Goodstadt L."/>
            <person name="Hillier L.W."/>
            <person name="Zody M.C."/>
            <person name="Goldstein S."/>
            <person name="She X."/>
            <person name="Bult C.J."/>
            <person name="Agarwala R."/>
            <person name="Cherry J.L."/>
            <person name="DiCuccio M."/>
            <person name="Hlavina W."/>
            <person name="Kapustin Y."/>
            <person name="Meric P."/>
            <person name="Maglott D."/>
            <person name="Birtle Z."/>
            <person name="Marques A.C."/>
            <person name="Graves T."/>
            <person name="Zhou S."/>
            <person name="Teague B."/>
            <person name="Potamousis K."/>
            <person name="Churas C."/>
            <person name="Place M."/>
            <person name="Herschleb J."/>
            <person name="Runnheim R."/>
            <person name="Forrest D."/>
            <person name="Amos-Landgraf J."/>
            <person name="Schwartz D.C."/>
            <person name="Cheng Z."/>
            <person name="Lindblad-Toh K."/>
            <person name="Eichler E.E."/>
            <person name="Ponting C.P."/>
        </authorList>
    </citation>
    <scope>NUCLEOTIDE SEQUENCE [LARGE SCALE GENOMIC DNA]</scope>
    <source>
        <strain>C57BL/6J</strain>
    </source>
</reference>
<reference key="3">
    <citation type="journal article" date="1999" name="Hum. Mol. Genet.">
        <title>Unusual 5' transcript complexity of plectin isoforms: novel tissue-specific exons modulate actin binding activity.</title>
        <authorList>
            <person name="Fuchs P."/>
            <person name="Zoerer M."/>
            <person name="Rezniczek G.A."/>
            <person name="Spazierer D."/>
            <person name="Oehler S."/>
            <person name="Castanon M.J."/>
            <person name="Hauptmann R."/>
            <person name="Wiche G."/>
        </authorList>
    </citation>
    <scope>NUCLEOTIDE SEQUENCE [MRNA] OF 1-964</scope>
    <scope>ALTERNATIVE SPLICING</scope>
    <scope>TISSUE SPECIFICITY</scope>
    <source>
        <tissue>Brain</tissue>
        <tissue>Embryo</tissue>
        <tissue>Heart</tissue>
        <tissue>Kidney</tissue>
        <tissue>Skeletal muscle</tissue>
        <tissue>Testis</tissue>
    </source>
</reference>
<reference key="4">
    <citation type="journal article" date="2005" name="Science">
        <title>The transcriptional landscape of the mammalian genome.</title>
        <authorList>
            <person name="Carninci P."/>
            <person name="Kasukawa T."/>
            <person name="Katayama S."/>
            <person name="Gough J."/>
            <person name="Frith M.C."/>
            <person name="Maeda N."/>
            <person name="Oyama R."/>
            <person name="Ravasi T."/>
            <person name="Lenhard B."/>
            <person name="Wells C."/>
            <person name="Kodzius R."/>
            <person name="Shimokawa K."/>
            <person name="Bajic V.B."/>
            <person name="Brenner S.E."/>
            <person name="Batalov S."/>
            <person name="Forrest A.R."/>
            <person name="Zavolan M."/>
            <person name="Davis M.J."/>
            <person name="Wilming L.G."/>
            <person name="Aidinis V."/>
            <person name="Allen J.E."/>
            <person name="Ambesi-Impiombato A."/>
            <person name="Apweiler R."/>
            <person name="Aturaliya R.N."/>
            <person name="Bailey T.L."/>
            <person name="Bansal M."/>
            <person name="Baxter L."/>
            <person name="Beisel K.W."/>
            <person name="Bersano T."/>
            <person name="Bono H."/>
            <person name="Chalk A.M."/>
            <person name="Chiu K.P."/>
            <person name="Choudhary V."/>
            <person name="Christoffels A."/>
            <person name="Clutterbuck D.R."/>
            <person name="Crowe M.L."/>
            <person name="Dalla E."/>
            <person name="Dalrymple B.P."/>
            <person name="de Bono B."/>
            <person name="Della Gatta G."/>
            <person name="di Bernardo D."/>
            <person name="Down T."/>
            <person name="Engstrom P."/>
            <person name="Fagiolini M."/>
            <person name="Faulkner G."/>
            <person name="Fletcher C.F."/>
            <person name="Fukushima T."/>
            <person name="Furuno M."/>
            <person name="Futaki S."/>
            <person name="Gariboldi M."/>
            <person name="Georgii-Hemming P."/>
            <person name="Gingeras T.R."/>
            <person name="Gojobori T."/>
            <person name="Green R.E."/>
            <person name="Gustincich S."/>
            <person name="Harbers M."/>
            <person name="Hayashi Y."/>
            <person name="Hensch T.K."/>
            <person name="Hirokawa N."/>
            <person name="Hill D."/>
            <person name="Huminiecki L."/>
            <person name="Iacono M."/>
            <person name="Ikeo K."/>
            <person name="Iwama A."/>
            <person name="Ishikawa T."/>
            <person name="Jakt M."/>
            <person name="Kanapin A."/>
            <person name="Katoh M."/>
            <person name="Kawasawa Y."/>
            <person name="Kelso J."/>
            <person name="Kitamura H."/>
            <person name="Kitano H."/>
            <person name="Kollias G."/>
            <person name="Krishnan S.P."/>
            <person name="Kruger A."/>
            <person name="Kummerfeld S.K."/>
            <person name="Kurochkin I.V."/>
            <person name="Lareau L.F."/>
            <person name="Lazarevic D."/>
            <person name="Lipovich L."/>
            <person name="Liu J."/>
            <person name="Liuni S."/>
            <person name="McWilliam S."/>
            <person name="Madan Babu M."/>
            <person name="Madera M."/>
            <person name="Marchionni L."/>
            <person name="Matsuda H."/>
            <person name="Matsuzawa S."/>
            <person name="Miki H."/>
            <person name="Mignone F."/>
            <person name="Miyake S."/>
            <person name="Morris K."/>
            <person name="Mottagui-Tabar S."/>
            <person name="Mulder N."/>
            <person name="Nakano N."/>
            <person name="Nakauchi H."/>
            <person name="Ng P."/>
            <person name="Nilsson R."/>
            <person name="Nishiguchi S."/>
            <person name="Nishikawa S."/>
            <person name="Nori F."/>
            <person name="Ohara O."/>
            <person name="Okazaki Y."/>
            <person name="Orlando V."/>
            <person name="Pang K.C."/>
            <person name="Pavan W.J."/>
            <person name="Pavesi G."/>
            <person name="Pesole G."/>
            <person name="Petrovsky N."/>
            <person name="Piazza S."/>
            <person name="Reed J."/>
            <person name="Reid J.F."/>
            <person name="Ring B.Z."/>
            <person name="Ringwald M."/>
            <person name="Rost B."/>
            <person name="Ruan Y."/>
            <person name="Salzberg S.L."/>
            <person name="Sandelin A."/>
            <person name="Schneider C."/>
            <person name="Schoenbach C."/>
            <person name="Sekiguchi K."/>
            <person name="Semple C.A."/>
            <person name="Seno S."/>
            <person name="Sessa L."/>
            <person name="Sheng Y."/>
            <person name="Shibata Y."/>
            <person name="Shimada H."/>
            <person name="Shimada K."/>
            <person name="Silva D."/>
            <person name="Sinclair B."/>
            <person name="Sperling S."/>
            <person name="Stupka E."/>
            <person name="Sugiura K."/>
            <person name="Sultana R."/>
            <person name="Takenaka Y."/>
            <person name="Taki K."/>
            <person name="Tammoja K."/>
            <person name="Tan S.L."/>
            <person name="Tang S."/>
            <person name="Taylor M.S."/>
            <person name="Tegner J."/>
            <person name="Teichmann S.A."/>
            <person name="Ueda H.R."/>
            <person name="van Nimwegen E."/>
            <person name="Verardo R."/>
            <person name="Wei C.L."/>
            <person name="Yagi K."/>
            <person name="Yamanishi H."/>
            <person name="Zabarovsky E."/>
            <person name="Zhu S."/>
            <person name="Zimmer A."/>
            <person name="Hide W."/>
            <person name="Bult C."/>
            <person name="Grimmond S.M."/>
            <person name="Teasdale R.D."/>
            <person name="Liu E.T."/>
            <person name="Brusic V."/>
            <person name="Quackenbush J."/>
            <person name="Wahlestedt C."/>
            <person name="Mattick J.S."/>
            <person name="Hume D.A."/>
            <person name="Kai C."/>
            <person name="Sasaki D."/>
            <person name="Tomaru Y."/>
            <person name="Fukuda S."/>
            <person name="Kanamori-Katayama M."/>
            <person name="Suzuki M."/>
            <person name="Aoki J."/>
            <person name="Arakawa T."/>
            <person name="Iida J."/>
            <person name="Imamura K."/>
            <person name="Itoh M."/>
            <person name="Kato T."/>
            <person name="Kawaji H."/>
            <person name="Kawagashira N."/>
            <person name="Kawashima T."/>
            <person name="Kojima M."/>
            <person name="Kondo S."/>
            <person name="Konno H."/>
            <person name="Nakano K."/>
            <person name="Ninomiya N."/>
            <person name="Nishio T."/>
            <person name="Okada M."/>
            <person name="Plessy C."/>
            <person name="Shibata K."/>
            <person name="Shiraki T."/>
            <person name="Suzuki S."/>
            <person name="Tagami M."/>
            <person name="Waki K."/>
            <person name="Watahiki A."/>
            <person name="Okamura-Oho Y."/>
            <person name="Suzuki H."/>
            <person name="Kawai J."/>
            <person name="Hayashizaki Y."/>
        </authorList>
    </citation>
    <scope>NUCLEOTIDE SEQUENCE [LARGE SCALE MRNA] OF 181-812</scope>
    <source>
        <strain>C57BL/6J</strain>
        <tissue>Embryo</tissue>
    </source>
</reference>
<reference key="5">
    <citation type="submission" date="2009-01" db="UniProtKB">
        <authorList>
            <person name="Lubec G."/>
            <person name="Sunyer B."/>
            <person name="Chen W.-Q."/>
        </authorList>
    </citation>
    <scope>PROTEIN SEQUENCE OF 629-633</scope>
    <scope>IDENTIFICATION BY MASS SPECTROMETRY</scope>
    <source>
        <strain>OF1</strain>
        <tissue>Hippocampus</tissue>
    </source>
</reference>
<reference key="6">
    <citation type="journal article" date="2002" name="Biochem. Biophys. Res. Commun.">
        <title>Direct binding of plectin to Fer kinase and negative regulation of its catalytic activity.</title>
        <authorList>
            <person name="Lunter P.C."/>
            <person name="Wiche G."/>
        </authorList>
    </citation>
    <scope>INTERACTION WITH FER</scope>
</reference>
<reference key="7">
    <citation type="journal article" date="2005" name="J. Cell Biol.">
        <title>Nesprin-3, a novel outer nuclear membrane protein, associates with the cytoskeletal linker protein plectin.</title>
        <authorList>
            <person name="Wilhelmsen K."/>
            <person name="Litjens S.H.M."/>
            <person name="Kuikman I."/>
            <person name="Tshimbalanga N."/>
            <person name="Janssen H."/>
            <person name="van den Bout I."/>
            <person name="Raymond K."/>
            <person name="Sonnenberg A."/>
        </authorList>
    </citation>
    <scope>INTERACTION WITH SYNE3</scope>
</reference>
<reference key="8">
    <citation type="journal article" date="2005" name="Nat. Biotechnol.">
        <title>Immunoaffinity profiling of tyrosine phosphorylation in cancer cells.</title>
        <authorList>
            <person name="Rush J."/>
            <person name="Moritz A."/>
            <person name="Lee K.A."/>
            <person name="Guo A."/>
            <person name="Goss V.L."/>
            <person name="Spek E.J."/>
            <person name="Zhang H."/>
            <person name="Zha X.-M."/>
            <person name="Polakiewicz R.D."/>
            <person name="Comb M.J."/>
        </authorList>
    </citation>
    <scope>IDENTIFICATION BY MASS SPECTROMETRY [LARGE SCALE ANALYSIS]</scope>
</reference>
<reference key="9">
    <citation type="journal article" date="2006" name="Mol. Cell. Proteomics">
        <title>Comprehensive identification of phosphorylation sites in postsynaptic density preparations.</title>
        <authorList>
            <person name="Trinidad J.C."/>
            <person name="Specht C.G."/>
            <person name="Thalhammer A."/>
            <person name="Schoepfer R."/>
            <person name="Burlingame A.L."/>
        </authorList>
    </citation>
    <scope>PHOSPHORYLATION [LARGE SCALE ANALYSIS] AT SER-728</scope>
    <scope>IDENTIFICATION BY MASS SPECTROMETRY [LARGE SCALE ANALYSIS]</scope>
    <source>
        <tissue>Brain</tissue>
    </source>
</reference>
<reference key="10">
    <citation type="journal article" date="2007" name="J. Immunol.">
        <title>Quantitative time-resolved phosphoproteomic analysis of mast cell signaling.</title>
        <authorList>
            <person name="Cao L."/>
            <person name="Yu K."/>
            <person name="Banh C."/>
            <person name="Nguyen V."/>
            <person name="Ritz A."/>
            <person name="Raphael B.J."/>
            <person name="Kawakami Y."/>
            <person name="Kawakami T."/>
            <person name="Salomon A.R."/>
        </authorList>
    </citation>
    <scope>PHOSPHORYLATION [LARGE SCALE ANALYSIS] AT TYR-2788; TYR-3040; TYR-3369; TYR-3797 AND TYR-4622</scope>
    <scope>PHOSPHORYLATION [LARGE SCALE ANALYSIS] AT TYR-26 (ISOFORM PLEC-1A)</scope>
    <scope>IDENTIFICATION BY MASS SPECTROMETRY [LARGE SCALE ANALYSIS]</scope>
    <source>
        <tissue>Mast cell</tissue>
    </source>
</reference>
<reference key="11">
    <citation type="journal article" date="2007" name="Mol. Cell. Proteomics">
        <title>Qualitative and quantitative analyses of protein phosphorylation in naive and stimulated mouse synaptosomal preparations.</title>
        <authorList>
            <person name="Munton R.P."/>
            <person name="Tweedie-Cullen R."/>
            <person name="Livingstone-Zatchej M."/>
            <person name="Weinandy F."/>
            <person name="Waidelich M."/>
            <person name="Longo D."/>
            <person name="Gehrig P."/>
            <person name="Potthast F."/>
            <person name="Rutishauser D."/>
            <person name="Gerrits B."/>
            <person name="Panse C."/>
            <person name="Schlapbach R."/>
            <person name="Mansuy I.M."/>
        </authorList>
    </citation>
    <scope>IDENTIFICATION BY MASS SPECTROMETRY [LARGE SCALE ANALYSIS]</scope>
    <source>
        <tissue>Brain cortex</tissue>
    </source>
</reference>
<reference key="12">
    <citation type="journal article" date="2007" name="Mol. Cell. Proteomics">
        <title>Mitochondrial phosphoproteome revealed by an improved IMAC method and MS/MS/MS.</title>
        <authorList>
            <person name="Lee J."/>
            <person name="Xu Y."/>
            <person name="Chen Y."/>
            <person name="Sprung R."/>
            <person name="Kim S.C."/>
            <person name="Xie S."/>
            <person name="Zhao Y."/>
        </authorList>
    </citation>
    <scope>PHOSPHORYLATION [LARGE SCALE ANALYSIS] AT THR-823</scope>
    <scope>IDENTIFICATION BY MASS SPECTROMETRY [LARGE SCALE ANALYSIS]</scope>
    <source>
        <tissue>Liver</tissue>
    </source>
</reference>
<reference key="13">
    <citation type="journal article" date="2007" name="Proc. Natl. Acad. Sci. U.S.A.">
        <title>Large-scale phosphorylation analysis of mouse liver.</title>
        <authorList>
            <person name="Villen J."/>
            <person name="Beausoleil S.A."/>
            <person name="Gerber S.A."/>
            <person name="Gygi S.P."/>
        </authorList>
    </citation>
    <scope>PHOSPHORYLATION [LARGE SCALE ANALYSIS] AT SER-4633</scope>
    <scope>IDENTIFICATION BY MASS SPECTROMETRY [LARGE SCALE ANALYSIS]</scope>
    <source>
        <tissue>Liver</tissue>
    </source>
</reference>
<reference key="14">
    <citation type="journal article" date="2008" name="J. Cell Sci.">
        <title>TorsinA binds the KASH domain of nesprins and participates in linkage between nuclear envelope and cytoskeleton.</title>
        <authorList>
            <person name="Nery F.C."/>
            <person name="Zeng J."/>
            <person name="Niland B.P."/>
            <person name="Hewett J."/>
            <person name="Farley J."/>
            <person name="Irimia D."/>
            <person name="Li Y."/>
            <person name="Wiche G."/>
            <person name="Sonnenberg A."/>
            <person name="Breakefield X.O."/>
        </authorList>
    </citation>
    <scope>INTERACTION WITH TOR1A</scope>
</reference>
<reference key="15">
    <citation type="journal article" date="2008" name="J. Proteome Res.">
        <title>Specific phosphopeptide enrichment with immobilized titanium ion affinity chromatography adsorbent for phosphoproteome analysis.</title>
        <authorList>
            <person name="Zhou H."/>
            <person name="Ye M."/>
            <person name="Dong J."/>
            <person name="Han G."/>
            <person name="Jiang X."/>
            <person name="Wu R."/>
            <person name="Zou H."/>
        </authorList>
    </citation>
    <scope>IDENTIFICATION BY MASS SPECTROMETRY [LARGE SCALE ANALYSIS]</scope>
    <source>
        <tissue>Liver</tissue>
    </source>
</reference>
<reference key="16">
    <citation type="journal article" date="2009" name="Immunity">
        <title>The phagosomal proteome in interferon-gamma-activated macrophages.</title>
        <authorList>
            <person name="Trost M."/>
            <person name="English L."/>
            <person name="Lemieux S."/>
            <person name="Courcelles M."/>
            <person name="Desjardins M."/>
            <person name="Thibault P."/>
        </authorList>
    </citation>
    <scope>PHOSPHORYLATION [LARGE SCALE ANALYSIS] AT SER-4393 AND SER-4396</scope>
    <scope>PHOSPHORYLATION [LARGE SCALE ANALYSIS] AT SER-21 (ISOFORM PLEC-1A)</scope>
    <scope>IDENTIFICATION BY MASS SPECTROMETRY [LARGE SCALE ANALYSIS]</scope>
</reference>
<reference key="17">
    <citation type="journal article" date="2009" name="Mol. Cell. Proteomics">
        <title>Large scale localization of protein phosphorylation by use of electron capture dissociation mass spectrometry.</title>
        <authorList>
            <person name="Sweet S.M."/>
            <person name="Bailey C.M."/>
            <person name="Cunningham D.L."/>
            <person name="Heath J.K."/>
            <person name="Cooper H.J."/>
        </authorList>
    </citation>
    <scope>PHOSPHORYLATION [LARGE SCALE ANALYSIS] AT SER-4389 AND SER-4393</scope>
    <scope>PHOSPHORYLATION [LARGE SCALE ANALYSIS] AT SER-21 (ISOFORM PLEC-1A)</scope>
    <scope>IDENTIFICATION BY MASS SPECTROMETRY [LARGE SCALE ANALYSIS]</scope>
    <source>
        <tissue>Embryonic fibroblast</tissue>
    </source>
</reference>
<reference key="18">
    <citation type="journal article" date="2010" name="Cell">
        <title>A tissue-specific atlas of mouse protein phosphorylation and expression.</title>
        <authorList>
            <person name="Huttlin E.L."/>
            <person name="Jedrychowski M.P."/>
            <person name="Elias J.E."/>
            <person name="Goswami T."/>
            <person name="Rad R."/>
            <person name="Beausoleil S.A."/>
            <person name="Villen J."/>
            <person name="Haas W."/>
            <person name="Sowa M.E."/>
            <person name="Gygi S.P."/>
        </authorList>
    </citation>
    <scope>PHOSPHORYLATION [LARGE SCALE ANALYSIS] AT SER-728; SER-1055; THR-4037; SER-4389; SER-4391; SER-4392; SER-4393; SER-4396; SER-4620; SER-4625; SER-4629; THR-4630; SER-4633 AND SER-4649</scope>
    <scope>PHOSPHORYLATION [LARGE SCALE ANALYSIS] AT SER-21 (ISOFORM PLEC-1A)</scope>
    <scope>IDENTIFICATION BY MASS SPECTROMETRY [LARGE SCALE ANALYSIS]</scope>
    <source>
        <tissue>Brain</tissue>
        <tissue>Brown adipose tissue</tissue>
        <tissue>Heart</tissue>
        <tissue>Kidney</tissue>
        <tissue>Liver</tissue>
        <tissue>Lung</tissue>
        <tissue>Pancreas</tissue>
        <tissue>Spleen</tissue>
        <tissue>Testis</tissue>
    </source>
</reference>
<reference key="19">
    <citation type="journal article" date="2010" name="Exp. Cell Res.">
        <title>BPAG1 isoform-b: complex distribution pattern in striated and heart muscle and association with plectin and alpha-actinin.</title>
        <authorList>
            <person name="Steiner-Champliaud M.F."/>
            <person name="Schneider Y."/>
            <person name="Favre B."/>
            <person name="Paulhe F."/>
            <person name="Praetzel-Wunder S."/>
            <person name="Faulkner G."/>
            <person name="Konieczny P."/>
            <person name="Raith M."/>
            <person name="Wiche G."/>
            <person name="Adebola A."/>
            <person name="Liem R.K."/>
            <person name="Langbein L."/>
            <person name="Sonnenberg A."/>
            <person name="Fontao L."/>
            <person name="Borradori L."/>
        </authorList>
    </citation>
    <scope>INTERACTION WITH DST</scope>
</reference>
<reference key="20">
    <citation type="journal article" date="2011" name="Dev. Biol.">
        <title>Periaxin is required for hexagonal geometry and membrane organization of mature lens fibers.</title>
        <authorList>
            <person name="Maddala R."/>
            <person name="Skiba N.P."/>
            <person name="Lalane R. III"/>
            <person name="Sherman D.L."/>
            <person name="Brophy P.J."/>
            <person name="Rao P.V."/>
        </authorList>
    </citation>
    <scope>TISSUE SPECIFICITY</scope>
    <scope>IDENTIFICATION IN A COMPLEX WITH EZR; AHNAK; BFSP1; BFSP2; ANK2; PRX; VIM AND SPECTRIN</scope>
</reference>
<reference key="21">
    <citation type="journal article" date="2013" name="J. Cell Sci.">
        <title>Amotl2 interacts with LL5beta, localizes to podosomes and regulates postsynaptic differentiation in muscle.</title>
        <authorList>
            <person name="Proszynski T.J."/>
            <person name="Sanes J.R."/>
        </authorList>
    </citation>
    <scope>SUBCELLULAR LOCATION</scope>
</reference>
<reference key="22">
    <citation type="journal article" date="2013" name="Mol. Cell">
        <title>SIRT5-mediated lysine desuccinylation impacts diverse metabolic pathways.</title>
        <authorList>
            <person name="Park J."/>
            <person name="Chen Y."/>
            <person name="Tishkoff D.X."/>
            <person name="Peng C."/>
            <person name="Tan M."/>
            <person name="Dai L."/>
            <person name="Xie Z."/>
            <person name="Zhang Y."/>
            <person name="Zwaans B.M."/>
            <person name="Skinner M.E."/>
            <person name="Lombard D.B."/>
            <person name="Zhao Y."/>
        </authorList>
    </citation>
    <scope>ACETYLATION [LARGE SCALE ANALYSIS] AT LYS-1733; LYS-2644 AND LYS-3060</scope>
    <scope>IDENTIFICATION BY MASS SPECTROMETRY [LARGE SCALE ANALYSIS]</scope>
    <source>
        <tissue>Embryonic fibroblast</tissue>
    </source>
</reference>
<reference key="23">
    <citation type="journal article" date="2014" name="J. Invest. Dermatol.">
        <title>Interaction of plectin with keratins 5 and 14: dependence on several plectin domains and keratin quaternary structure.</title>
        <authorList>
            <person name="Bouameur J.E."/>
            <person name="Favre B."/>
            <person name="Fontao L."/>
            <person name="Lingasamy P."/>
            <person name="Begre N."/>
            <person name="Borradori L."/>
        </authorList>
    </citation>
    <scope>INTERACTION WITH KRT1; KRT5; KRT8; KRT10; KRT14; KRT15; KRT18; DES AND VIM</scope>
</reference>
<reference key="24">
    <citation type="journal article" date="2014" name="Mol. Cell. Proteomics">
        <title>Immunoaffinity enrichment and mass spectrometry analysis of protein methylation.</title>
        <authorList>
            <person name="Guo A."/>
            <person name="Gu H."/>
            <person name="Zhou J."/>
            <person name="Mulhern D."/>
            <person name="Wang Y."/>
            <person name="Lee K.A."/>
            <person name="Yang V."/>
            <person name="Aguiar M."/>
            <person name="Kornhauser J."/>
            <person name="Jia X."/>
            <person name="Ren J."/>
            <person name="Beausoleil S.A."/>
            <person name="Silva J.C."/>
            <person name="Vemulapalli V."/>
            <person name="Bedford M.T."/>
            <person name="Comb M.J."/>
        </authorList>
    </citation>
    <scope>METHYLATION [LARGE SCALE ANALYSIS] AT ARG-4634 AND ARG-4647</scope>
    <scope>IDENTIFICATION BY MASS SPECTROMETRY [LARGE SCALE ANALYSIS]</scope>
    <source>
        <tissue>Brain</tissue>
    </source>
</reference>
<reference key="25">
    <citation type="journal article" date="2004" name="Eur. J. Biochem.">
        <title>Actin-binding domain of mouse plectin. Crystal structure and binding to vimentin.</title>
        <authorList>
            <person name="Sevcik J."/>
            <person name="Urbanikova L."/>
            <person name="Kost'an J."/>
            <person name="Janda L."/>
            <person name="Wiche G."/>
        </authorList>
    </citation>
    <scope>X-RAY CRYSTALLOGRAPHY (2.00 ANGSTROMS) OF 181-417</scope>
    <scope>INTERACTION WITH VIM</scope>
</reference>
<name>PLEC_MOUSE</name>
<gene>
    <name type="primary">Plec</name>
    <name type="synonym">Plec1</name>
</gene>
<keyword id="KW-0002">3D-structure</keyword>
<keyword id="KW-0007">Acetylation</keyword>
<keyword id="KW-0009">Actin-binding</keyword>
<keyword id="KW-0025">Alternative splicing</keyword>
<keyword id="KW-0965">Cell junction</keyword>
<keyword id="KW-0966">Cell projection</keyword>
<keyword id="KW-0175">Coiled coil</keyword>
<keyword id="KW-0963">Cytoplasm</keyword>
<keyword id="KW-0206">Cytoskeleton</keyword>
<keyword id="KW-0903">Direct protein sequencing</keyword>
<keyword id="KW-0488">Methylation</keyword>
<keyword id="KW-0597">Phosphoprotein</keyword>
<keyword id="KW-1185">Reference proteome</keyword>
<keyword id="KW-0677">Repeat</keyword>
<keyword id="KW-0728">SH3 domain</keyword>
<protein>
    <recommendedName>
        <fullName>Plectin</fullName>
        <shortName>PCN</shortName>
        <shortName>PLTN</shortName>
    </recommendedName>
    <alternativeName>
        <fullName>Plectin-1</fullName>
    </alternativeName>
    <alternativeName>
        <fullName>Plectin-6</fullName>
    </alternativeName>
</protein>
<feature type="chain" id="PRO_0000078136" description="Plectin">
    <location>
        <begin position="1"/>
        <end position="4691"/>
    </location>
</feature>
<feature type="domain" description="Calponin-homology (CH) 1" evidence="6">
    <location>
        <begin position="185"/>
        <end position="293"/>
    </location>
</feature>
<feature type="domain" description="Calponin-homology (CH) 2" evidence="6">
    <location>
        <begin position="306"/>
        <end position="411"/>
    </location>
</feature>
<feature type="repeat" description="Spectrin 1">
    <location>
        <begin position="653"/>
        <end position="727"/>
    </location>
</feature>
<feature type="repeat" description="Spectrin 2">
    <location>
        <begin position="748"/>
        <end position="832"/>
    </location>
</feature>
<feature type="repeat" description="Spectrin 3">
    <location>
        <begin position="845"/>
        <end position="938"/>
    </location>
</feature>
<feature type="domain" description="SH3" evidence="7">
    <location>
        <begin position="949"/>
        <end position="1006"/>
    </location>
</feature>
<feature type="repeat" description="Spectrin 4">
    <location>
        <begin position="1323"/>
        <end position="1423"/>
    </location>
</feature>
<feature type="repeat" description="Plectin 1">
    <location>
        <begin position="2795"/>
        <end position="2832"/>
    </location>
</feature>
<feature type="repeat" description="Plectin 2">
    <location>
        <begin position="2833"/>
        <end position="2870"/>
    </location>
</feature>
<feature type="repeat" description="Plectin 3">
    <location>
        <begin position="2871"/>
        <end position="2908"/>
    </location>
</feature>
<feature type="repeat" description="Plectin 4">
    <location>
        <begin position="2909"/>
        <end position="2946"/>
    </location>
</feature>
<feature type="repeat" description="Plectin 5">
    <location>
        <begin position="2947"/>
        <end position="2984"/>
    </location>
</feature>
<feature type="repeat" description="Plectin 6">
    <location>
        <begin position="2988"/>
        <end position="3022"/>
    </location>
</feature>
<feature type="repeat" description="Plectin 7">
    <location>
        <begin position="3123"/>
        <end position="3160"/>
    </location>
</feature>
<feature type="repeat" description="Plectin 8">
    <location>
        <begin position="3161"/>
        <end position="3198"/>
    </location>
</feature>
<feature type="repeat" description="Plectin 9">
    <location>
        <begin position="3199"/>
        <end position="3236"/>
    </location>
</feature>
<feature type="repeat" description="Plectin 10">
    <location>
        <begin position="3237"/>
        <end position="3274"/>
    </location>
</feature>
<feature type="repeat" description="Plectin 11">
    <location>
        <begin position="3275"/>
        <end position="3312"/>
    </location>
</feature>
<feature type="repeat" description="Plectin 12">
    <location>
        <begin position="3315"/>
        <end position="3350"/>
    </location>
</feature>
<feature type="repeat" description="Plectin 13">
    <location>
        <begin position="3492"/>
        <end position="3529"/>
    </location>
</feature>
<feature type="repeat" description="Plectin 14">
    <location>
        <begin position="3530"/>
        <end position="3567"/>
    </location>
</feature>
<feature type="repeat" description="Plectin 15">
    <location>
        <begin position="3568"/>
        <end position="3605"/>
    </location>
</feature>
<feature type="repeat" description="Plectin 16">
    <location>
        <begin position="3606"/>
        <end position="3643"/>
    </location>
</feature>
<feature type="repeat" description="Plectin 17">
    <location>
        <begin position="3647"/>
        <end position="3681"/>
    </location>
</feature>
<feature type="repeat" description="Plectin 18">
    <location>
        <begin position="3827"/>
        <end position="3864"/>
    </location>
</feature>
<feature type="repeat" description="Plectin 19">
    <location>
        <begin position="3865"/>
        <end position="3902"/>
    </location>
</feature>
<feature type="repeat" description="Plectin 20">
    <location>
        <begin position="3903"/>
        <end position="3940"/>
    </location>
</feature>
<feature type="repeat" description="Plectin 21">
    <location>
        <begin position="3941"/>
        <end position="3978"/>
    </location>
</feature>
<feature type="repeat" description="Plectin 22">
    <location>
        <begin position="3982"/>
        <end position="4015"/>
    </location>
</feature>
<feature type="repeat" description="Plectin 23">
    <location>
        <begin position="4070"/>
        <end position="4107"/>
    </location>
</feature>
<feature type="repeat" description="Plectin 24">
    <location>
        <begin position="4108"/>
        <end position="4145"/>
    </location>
</feature>
<feature type="repeat" description="Plectin 25">
    <location>
        <begin position="4146"/>
        <end position="4183"/>
    </location>
</feature>
<feature type="repeat" description="Plectin 26">
    <location>
        <begin position="4184"/>
        <end position="4221"/>
    </location>
</feature>
<feature type="repeat" description="Plectin 27">
    <location>
        <begin position="4225"/>
        <end position="4259"/>
    </location>
</feature>
<feature type="repeat" description="Plectin 28">
    <location>
        <begin position="4272"/>
        <end position="4312"/>
    </location>
</feature>
<feature type="repeat" description="Plectin 29">
    <location>
        <begin position="4415"/>
        <end position="4452"/>
    </location>
</feature>
<feature type="repeat" description="Plectin 30">
    <location>
        <begin position="4453"/>
        <end position="4490"/>
    </location>
</feature>
<feature type="repeat" description="Plectin 31">
    <location>
        <begin position="4491"/>
        <end position="4528"/>
    </location>
</feature>
<feature type="repeat" description="Plectin 32">
    <location>
        <begin position="4529"/>
        <end position="4566"/>
    </location>
</feature>
<feature type="repeat" description="Plectin 33">
    <location>
        <begin position="4567"/>
        <end position="4604"/>
    </location>
</feature>
<feature type="region of interest" description="Globular 1" evidence="1">
    <location>
        <begin position="1"/>
        <end position="1478"/>
    </location>
</feature>
<feature type="region of interest" description="Disordered" evidence="8">
    <location>
        <begin position="113"/>
        <end position="161"/>
    </location>
</feature>
<feature type="region of interest" description="Disordered" evidence="8">
    <location>
        <begin position="167"/>
        <end position="186"/>
    </location>
</feature>
<feature type="region of interest" description="Actin-binding">
    <location>
        <begin position="181"/>
        <end position="411"/>
    </location>
</feature>
<feature type="region of interest" description="Central fibrous rod domain" evidence="1">
    <location>
        <begin position="1479"/>
        <end position="2762"/>
    </location>
</feature>
<feature type="region of interest" description="Disordered" evidence="8">
    <location>
        <begin position="1626"/>
        <end position="1653"/>
    </location>
</feature>
<feature type="region of interest" description="Disordered" evidence="8">
    <location>
        <begin position="1801"/>
        <end position="1835"/>
    </location>
</feature>
<feature type="region of interest" description="Disordered" evidence="8">
    <location>
        <begin position="2100"/>
        <end position="2141"/>
    </location>
</feature>
<feature type="region of interest" description="Disordered" evidence="8">
    <location>
        <begin position="2223"/>
        <end position="2317"/>
    </location>
</feature>
<feature type="region of interest" description="Disordered" evidence="8">
    <location>
        <begin position="2675"/>
        <end position="2728"/>
    </location>
</feature>
<feature type="region of interest" description="Globular 2" evidence="1">
    <location>
        <begin position="2763"/>
        <end position="4691"/>
    </location>
</feature>
<feature type="region of interest" description="Disordered" evidence="8">
    <location>
        <begin position="3312"/>
        <end position="3338"/>
    </location>
</feature>
<feature type="region of interest" description="Binding to intermediate filaments" evidence="1">
    <location>
        <begin position="4257"/>
        <end position="4307"/>
    </location>
</feature>
<feature type="region of interest" description="Disordered" evidence="8">
    <location>
        <begin position="4387"/>
        <end position="4420"/>
    </location>
</feature>
<feature type="region of interest" description="Disordered" evidence="8">
    <location>
        <begin position="4618"/>
        <end position="4691"/>
    </location>
</feature>
<feature type="region of interest" description="4 X 4 AA tandem repeats of G-S-R-X">
    <location>
        <begin position="4632"/>
        <end position="4647"/>
    </location>
</feature>
<feature type="coiled-coil region" evidence="5">
    <location>
        <begin position="1477"/>
        <end position="1697"/>
    </location>
</feature>
<feature type="coiled-coil region" evidence="5">
    <location>
        <begin position="1729"/>
        <end position="2764"/>
    </location>
</feature>
<feature type="compositionally biased region" description="Basic and acidic residues" evidence="8">
    <location>
        <begin position="137"/>
        <end position="154"/>
    </location>
</feature>
<feature type="compositionally biased region" description="Basic and acidic residues" evidence="8">
    <location>
        <begin position="1806"/>
        <end position="1835"/>
    </location>
</feature>
<feature type="compositionally biased region" description="Basic and acidic residues" evidence="8">
    <location>
        <begin position="2100"/>
        <end position="2116"/>
    </location>
</feature>
<feature type="compositionally biased region" description="Basic and acidic residues" evidence="8">
    <location>
        <begin position="2124"/>
        <end position="2136"/>
    </location>
</feature>
<feature type="compositionally biased region" description="Basic and acidic residues" evidence="8">
    <location>
        <begin position="2223"/>
        <end position="2266"/>
    </location>
</feature>
<feature type="compositionally biased region" description="Low complexity" evidence="8">
    <location>
        <begin position="2267"/>
        <end position="2280"/>
    </location>
</feature>
<feature type="compositionally biased region" description="Basic and acidic residues" evidence="8">
    <location>
        <begin position="2281"/>
        <end position="2296"/>
    </location>
</feature>
<feature type="compositionally biased region" description="Basic and acidic residues" evidence="8">
    <location>
        <begin position="2687"/>
        <end position="2728"/>
    </location>
</feature>
<feature type="compositionally biased region" description="Basic and acidic residues" evidence="8">
    <location>
        <begin position="3312"/>
        <end position="3326"/>
    </location>
</feature>
<feature type="compositionally biased region" description="Polar residues" evidence="8">
    <location>
        <begin position="3328"/>
        <end position="3338"/>
    </location>
</feature>
<feature type="compositionally biased region" description="Low complexity" evidence="8">
    <location>
        <begin position="4389"/>
        <end position="4404"/>
    </location>
</feature>
<feature type="compositionally biased region" description="Polar residues" evidence="8">
    <location>
        <begin position="4406"/>
        <end position="4416"/>
    </location>
</feature>
<feature type="compositionally biased region" description="Low complexity" evidence="8">
    <location>
        <begin position="4618"/>
        <end position="4678"/>
    </location>
</feature>
<feature type="modified residue" description="Phosphoserine" evidence="19 25">
    <location>
        <position position="728"/>
    </location>
</feature>
<feature type="modified residue" description="Phosphothreonine" evidence="20">
    <location>
        <position position="823"/>
    </location>
</feature>
<feature type="modified residue" description="Phosphoserine" evidence="25">
    <location>
        <position position="1055"/>
    </location>
</feature>
<feature type="modified residue" description="Phosphoserine" evidence="3">
    <location>
        <position position="1443"/>
    </location>
</feature>
<feature type="modified residue" description="Phosphoserine" evidence="3">
    <location>
        <position position="1729"/>
    </location>
</feature>
<feature type="modified residue" description="N6-acetyllysine" evidence="26">
    <location>
        <position position="1733"/>
    </location>
</feature>
<feature type="modified residue" description="Phosphoserine" evidence="3">
    <location>
        <position position="2639"/>
    </location>
</feature>
<feature type="modified residue" description="N6-acetyllysine" evidence="26">
    <location>
        <position position="2644"/>
    </location>
</feature>
<feature type="modified residue" description="Phosphoserine" evidence="2">
    <location>
        <position position="2781"/>
    </location>
</feature>
<feature type="modified residue" description="Phosphotyrosine" evidence="22">
    <location>
        <position position="2788"/>
    </location>
</feature>
<feature type="modified residue" description="Phosphoserine" evidence="3">
    <location>
        <position position="2809"/>
    </location>
</feature>
<feature type="modified residue" description="Phosphothreonine" evidence="3">
    <location>
        <position position="2893"/>
    </location>
</feature>
<feature type="modified residue" description="Phosphotyrosine" evidence="22">
    <location>
        <position position="3040"/>
    </location>
</feature>
<feature type="modified residue" description="N6-acetyllysine" evidence="26">
    <location>
        <position position="3060"/>
    </location>
</feature>
<feature type="modified residue" description="N6-acetyllysine" evidence="3">
    <location>
        <position position="3098"/>
    </location>
</feature>
<feature type="modified residue" description="Phosphotyrosine" evidence="22">
    <location>
        <position position="3369"/>
    </location>
</feature>
<feature type="modified residue" description="N6-acetyllysine" evidence="3">
    <location>
        <position position="3427"/>
    </location>
</feature>
<feature type="modified residue" description="Phosphothreonine" evidence="3">
    <location>
        <position position="3792"/>
    </location>
</feature>
<feature type="modified residue" description="Phosphotyrosine" evidence="22">
    <location>
        <position position="3797"/>
    </location>
</feature>
<feature type="modified residue" description="Phosphothreonine" evidence="25">
    <location>
        <position position="4037"/>
    </location>
</feature>
<feature type="modified residue" description="Phosphoserine" evidence="3">
    <location>
        <position position="4061"/>
    </location>
</feature>
<feature type="modified residue" description="Phosphoserine" evidence="23 25">
    <location>
        <position position="4389"/>
    </location>
</feature>
<feature type="modified residue" description="Phosphoserine" evidence="25">
    <location>
        <position position="4391"/>
    </location>
</feature>
<feature type="modified residue" description="Phosphoserine" evidence="25">
    <location>
        <position position="4392"/>
    </location>
</feature>
<feature type="modified residue" description="Phosphoserine" evidence="23 24 25">
    <location>
        <position position="4393"/>
    </location>
</feature>
<feature type="modified residue" description="Phosphoserine" evidence="24 25">
    <location>
        <position position="4396"/>
    </location>
</feature>
<feature type="modified residue" description="Phosphoserine" evidence="3">
    <location>
        <position position="4397"/>
    </location>
</feature>
<feature type="modified residue" description="Phosphoserine" evidence="3">
    <location>
        <position position="4398"/>
    </location>
</feature>
<feature type="modified residue" description="Phosphoserine" evidence="3">
    <location>
        <position position="4399"/>
    </location>
</feature>
<feature type="modified residue" description="Phosphotyrosine" evidence="3">
    <location>
        <position position="4400"/>
    </location>
</feature>
<feature type="modified residue" description="Phosphoserine" evidence="3">
    <location>
        <position position="4403"/>
    </location>
</feature>
<feature type="modified residue" description="Phosphoserine" evidence="2">
    <location>
        <position position="4413"/>
    </location>
</feature>
<feature type="modified residue" description="Phosphothreonine" evidence="3">
    <location>
        <position position="4418"/>
    </location>
</feature>
<feature type="modified residue" description="Phosphothreonine; by CDK1" evidence="4">
    <location>
        <position position="4546"/>
    </location>
</feature>
<feature type="modified residue" description="Phosphoserine" evidence="3">
    <location>
        <position position="4614"/>
    </location>
</feature>
<feature type="modified residue" description="Phosphoserine" evidence="25">
    <location>
        <position position="4620"/>
    </location>
</feature>
<feature type="modified residue" description="Phosphotyrosine" evidence="22">
    <location>
        <position position="4622"/>
    </location>
</feature>
<feature type="modified residue" description="Phosphoserine" evidence="3">
    <location>
        <position position="4623"/>
    </location>
</feature>
<feature type="modified residue" description="Phosphoserine" evidence="25">
    <location>
        <position position="4625"/>
    </location>
</feature>
<feature type="modified residue" description="Phosphoserine" evidence="25">
    <location>
        <position position="4629"/>
    </location>
</feature>
<feature type="modified residue" description="Phosphothreonine" evidence="25">
    <location>
        <position position="4630"/>
    </location>
</feature>
<feature type="modified residue" description="Phosphoserine" evidence="21 25">
    <location>
        <position position="4633"/>
    </location>
</feature>
<feature type="modified residue" description="Omega-N-methylarginine" evidence="27">
    <location>
        <position position="4634"/>
    </location>
</feature>
<feature type="modified residue" description="Omega-N-methylarginine" evidence="27">
    <location>
        <position position="4647"/>
    </location>
</feature>
<feature type="modified residue" description="Phosphoserine" evidence="25">
    <location>
        <position position="4649"/>
    </location>
</feature>
<feature type="modified residue" description="Phosphoserine" evidence="3">
    <location>
        <position position="4682"/>
    </location>
</feature>
<feature type="splice variant" id="VSP_005040" description="In isoform PLEC-1H." evidence="18">
    <location>
        <begin position="1"/>
        <end position="242"/>
    </location>
</feature>
<feature type="splice variant" id="VSP_005039" description="In isoform PLEC-0, isoform 1C, isoform PLEC-0, isoform 1C, isoform 2A, isoform 3A, isoform PLEC-0, isoform 1C and isoform 2A." evidence="18">
    <original>MVAGMLMPLDRLRAIYEVLFREGVMVAKKDRRPRSLHPHVPGVTNLQVMRAMASLKARGLVRETFA</original>
    <variation>MSGEDSEVRPVAVAEGSSNGSSGSPSPGDTLPWNLGKTQRSRRSGGGSVGNGSVLDPAERAVIRIA</variation>
    <location>
        <begin position="1"/>
        <end position="66"/>
    </location>
</feature>
<feature type="splice variant" id="VSP_005038" description="In isoform PLEC-1G." evidence="18">
    <original>MVAGMLMPLDRLRAIYEVLFREGVMVAKKDRRPRSLHPHVPGVT</original>
    <variation>MAGTWAAKGVFTSQREVLLERPCWLDGGCEQVRRGYLYGQLCCV</variation>
    <location>
        <begin position="1"/>
        <end position="44"/>
    </location>
</feature>
<feature type="splice variant" id="VSP_005036" description="In isoform PLEC-1A." evidence="18">
    <original>MVAGMLMPLDRLRAIYEVLFREGVMVAKKDRRPRSLH</original>
    <variation>MSQHRLRVPEPEGLGSKRTSSEDNLYLAVLRASEGKK</variation>
    <location>
        <begin position="1"/>
        <end position="37"/>
    </location>
</feature>
<feature type="splice variant" id="VSP_005037" description="In isoform PLEC-1B, isoform PLEC-1B and isoform 2A." evidence="18">
    <original>MVAGMLMPLDRLRAIYEVLFREGVMVAKKDRRPRSLH</original>
    <variation>MEPSGSLFPSLVVVGHVVTLAAVWHWRKGHRQAKDEQ</variation>
    <location>
        <begin position="1"/>
        <end position="37"/>
    </location>
</feature>
<feature type="splice variant" id="VSP_005035" description="In isoform PLEC-1I." evidence="18">
    <original>MVAGMLMPLDRLRAIYEVLFREGVMVAKKDRRP</original>
    <variation>MNETVCRRKLSPSGSTNTLSRLRGTSVTCTKTS</variation>
    <location>
        <begin position="1"/>
        <end position="33"/>
    </location>
</feature>
<feature type="splice variant" id="VSP_005034" description="In isoform PLEC-1F." evidence="18">
    <original>MVAGMLMPLDRLRAIYEVLFREGVMVAK</original>
    <variation>MAHLLTSGPPPDEQDFIQAYEEVREKYK</variation>
    <location>
        <begin position="1"/>
        <end position="28"/>
    </location>
</feature>
<feature type="splice variant" id="VSP_005033" description="In isoform PLEC-1E, isoform PLEC-1E and isoform 2A." evidence="18">
    <original>MVAGMLMPLDRLRAI</original>
    <variation>MDPSRAIQHEISSLK</variation>
    <location>
        <begin position="1"/>
        <end position="15"/>
    </location>
</feature>
<feature type="splice variant" id="VSP_005032" description="In isoform PLEC-1D, isoform PLEC-1D and isoform 2A." evidence="18">
    <original>MVAGM</original>
    <variation>MKIVP</variation>
    <location>
        <begin position="1"/>
        <end position="5"/>
    </location>
</feature>
<feature type="splice variant" id="VSP_005041" description="In isoform PLEC-1D, isoform PLEC-1D and isoform 2A." evidence="18">
    <location>
        <begin position="6"/>
        <end position="180"/>
    </location>
</feature>
<feature type="splice variant" id="VSP_005042" description="In isoform PLEC-1E, isoform PLEC-1E and isoform 2A." evidence="18">
    <location>
        <begin position="16"/>
        <end position="180"/>
    </location>
</feature>
<feature type="splice variant" id="VSP_005043" description="In isoform PLEC-1F." evidence="18">
    <location>
        <begin position="29"/>
        <end position="180"/>
    </location>
</feature>
<feature type="splice variant" id="VSP_005044" description="In isoform PLEC-1I." evidence="18">
    <location>
        <begin position="34"/>
        <end position="180"/>
    </location>
</feature>
<feature type="splice variant" id="VSP_005045" description="In isoform PLEC-1A, isoform PLEC-1B, isoform PLEC-1B and isoform 2A." evidence="18">
    <location>
        <begin position="38"/>
        <end position="180"/>
    </location>
</feature>
<feature type="splice variant" id="VSP_005046" description="In isoform PLEC-1G." evidence="18">
    <location>
        <begin position="45"/>
        <end position="180"/>
    </location>
</feature>
<feature type="splice variant" id="VSP_005047" description="In isoform PLEC-0, isoform 1C, isoform PLEC-0, isoform 1C, isoform 2A, isoform PLEC-0, isoform 1C, isoform 2A and isoform 3A." evidence="18">
    <location>
        <begin position="67"/>
        <end position="180"/>
    </location>
</feature>
<feature type="splice variant" id="VSP_005048" description="In isoform PLEC-1, isoform PLEC-1A, isoform PLEC-1B, isoform PLEC-1D, isoform PLEC-1E, isoform PLEC-1G, isoform PLEC-1F, isoform PLEC-0 and isoform 1C." evidence="18">
    <location>
        <begin position="202"/>
        <end position="206"/>
    </location>
</feature>
<feature type="splice variant" id="VSP_005049" description="In isoform PLEC-0, isoform 1C, isoform 2A and isoform 3A." evidence="18">
    <original>E</original>
    <variation>ERDVIRSVRLPRE</variation>
    <location>
        <position position="239"/>
    </location>
</feature>
<feature type="sequence conflict" description="In Ref. 1; AAR95666/AAR95671/AAR95676." evidence="18" ref="1">
    <original>A</original>
    <variation>V</variation>
    <location>
        <position position="2535"/>
    </location>
</feature>
<feature type="helix" evidence="29">
    <location>
        <begin position="181"/>
        <end position="199"/>
    </location>
</feature>
<feature type="helix" evidence="28">
    <location>
        <begin position="205"/>
        <end position="207"/>
    </location>
</feature>
<feature type="turn" evidence="29">
    <location>
        <begin position="214"/>
        <end position="220"/>
    </location>
</feature>
<feature type="helix" evidence="29">
    <location>
        <begin position="222"/>
        <end position="232"/>
    </location>
</feature>
<feature type="helix" evidence="29">
    <location>
        <begin position="244"/>
        <end position="260"/>
    </location>
</feature>
<feature type="helix" evidence="29">
    <location>
        <begin position="270"/>
        <end position="274"/>
    </location>
</feature>
<feature type="helix" evidence="29">
    <location>
        <begin position="278"/>
        <end position="292"/>
    </location>
</feature>
<feature type="helix" evidence="29">
    <location>
        <begin position="294"/>
        <end position="296"/>
    </location>
</feature>
<feature type="helix" evidence="29">
    <location>
        <begin position="308"/>
        <end position="319"/>
    </location>
</feature>
<feature type="turn" evidence="29">
    <location>
        <begin position="320"/>
        <end position="322"/>
    </location>
</feature>
<feature type="helix" evidence="29">
    <location>
        <begin position="333"/>
        <end position="335"/>
    </location>
</feature>
<feature type="helix" evidence="29">
    <location>
        <begin position="339"/>
        <end position="348"/>
    </location>
</feature>
<feature type="helix" evidence="29">
    <location>
        <begin position="350"/>
        <end position="352"/>
    </location>
</feature>
<feature type="helix" evidence="29">
    <location>
        <begin position="355"/>
        <end position="360"/>
    </location>
</feature>
<feature type="helix" evidence="29">
    <location>
        <begin position="363"/>
        <end position="378"/>
    </location>
</feature>
<feature type="helix" evidence="29">
    <location>
        <begin position="386"/>
        <end position="389"/>
    </location>
</feature>
<feature type="strand" evidence="29">
    <location>
        <begin position="390"/>
        <end position="393"/>
    </location>
</feature>
<feature type="helix" evidence="29">
    <location>
        <begin position="396"/>
        <end position="408"/>
    </location>
</feature>
<feature type="modified residue" description="Phosphoserine" evidence="23 24 25">
    <location sequence="Q9QXS1-3">
        <position position="21"/>
    </location>
</feature>
<feature type="modified residue" description="Phosphotyrosine" evidence="22">
    <location sequence="Q9QXS1-3">
        <position position="26"/>
    </location>
</feature>
<feature type="region of interest" description="Required for interaction with intermediate filament proteins" evidence="3">
    <location sequence="Q9QXS1-6">
        <begin position="963"/>
        <end position="4572"/>
    </location>
</feature>
<feature type="region of interest" description="Required for interaction with type2 keratins, DES and VIM" evidence="17">
    <location sequence="Q9QXS1-6">
        <begin position="3954"/>
        <end position="4291"/>
    </location>
</feature>
<feature type="region of interest" description="Required for efficient interaction with KRT5 and KRT14 heterodimers" evidence="17">
    <location sequence="Q9QXS1-6">
        <begin position="4503"/>
        <end position="4572"/>
    </location>
</feature>
<comment type="function">
    <text>Interlinks intermediate filaments with microtubules and microfilaments and anchors intermediate filaments to desmosomes or hemidesmosomes. May be involved not only in the cross-linking and stabilization of cytoskeletal intermediate filaments network, but also in the regulation of their dynamics.</text>
</comment>
<comment type="subunit">
    <text evidence="1 2 10 11 12 13 14 15">Homodimer or homotetramer (By similarity). Interacts (via actin-binding domain) with SYNE3 (PubMed:16330710). Interacts (via calponin-homology (CH) 1 domain) with VIM (via rod region) (PubMed:15128297). Interacts (via N-terminus) with DST isoform 2 (via N-terminus) (PubMed:19932097). Interacts with FER (PubMed:12200133). Interacts with TOR1A (PubMed:18827015). Interacts with ANK3 (By similarity). Identified in complexes that contain VIM, EZR, AHNAK, BFSP1, BFSP2, ANK2, PLEC, PRX and spectrin (PubMed:21745462).</text>
</comment>
<comment type="subunit">
    <molecule>Isoform PLEC-0,1C</molecule>
    <text evidence="17">Interacts with KRT14, heterodimers consisting of KRT8 and KRT18, heterodimers consisting of KRT5 and KRT14, heterodimers consisting of KRT14 and KRT15, and heterodimers consisting of KRT1 and KRT10 (PubMed:24940650). Interacts with DES and VIM (PubMed:24940650).</text>
</comment>
<comment type="interaction">
    <interactant intactId="EBI-774583">
        <id>Q9QXS1</id>
    </interactant>
    <interactant intactId="EBI-773210">
        <id>Q9D2G2</id>
        <label>Dlst</label>
    </interactant>
    <organismsDiffer>false</organismsDiffer>
    <experiments>2</experiments>
</comment>
<comment type="interaction">
    <interactant intactId="EBI-774583">
        <id>Q9QXS1</id>
    </interactant>
    <interactant intactId="EBI-773613">
        <id>P35486</id>
        <label>Pdha1</label>
    </interactant>
    <organismsDiffer>false</organismsDiffer>
    <experiments>2</experiments>
</comment>
<comment type="interaction">
    <interactant intactId="EBI-16145475">
        <id>Q9QXS1-3</id>
    </interactant>
    <interactant intactId="EBI-397435">
        <id>P62158</id>
        <label>CALM3</label>
    </interactant>
    <organismsDiffer>true</organismsDiffer>
    <experiments>11</experiments>
</comment>
<comment type="interaction">
    <interactant intactId="EBI-16145475">
        <id>Q9QXS1-3</id>
    </interactant>
    <interactant intactId="EBI-948678">
        <id>P16144</id>
        <label>ITGB4</label>
    </interactant>
    <organismsDiffer>true</organismsDiffer>
    <experiments>4</experiments>
</comment>
<comment type="subcellular location">
    <subcellularLocation>
        <location evidence="3">Cytoplasm</location>
        <location evidence="3">Cytoskeleton</location>
    </subcellularLocation>
    <subcellularLocation>
        <location evidence="3">Cell junction</location>
        <location evidence="3">Hemidesmosome</location>
    </subcellularLocation>
    <subcellularLocation>
        <location evidence="16">Cell projection</location>
        <location evidence="16">Podosome</location>
    </subcellularLocation>
    <text evidence="16">Localized to the cortex of myotube podosomes.</text>
</comment>
<comment type="alternative products">
    <event type="alternative splicing"/>
    <isoform>
        <id>Q9QXS1-1</id>
        <name>PLEC-1,2A</name>
        <sequence type="displayed"/>
    </isoform>
    <isoform>
        <id>Q9QXS1-2</id>
        <name>PLEC-1</name>
        <sequence type="described" ref="VSP_005048"/>
    </isoform>
    <isoform>
        <id>Q9QXS1-3</id>
        <name>PLEC-1A</name>
        <sequence type="described" ref="VSP_005036 VSP_005045 VSP_005048"/>
    </isoform>
    <isoform>
        <id>Q9QXS1-4</id>
        <name>PLEC-1B,2A</name>
        <sequence type="described" ref="VSP_005037 VSP_005045"/>
    </isoform>
    <isoform>
        <id>Q9QXS1-5</id>
        <name>PLEC-1B</name>
        <sequence type="described" ref="VSP_005037 VSP_005045 VSP_005048"/>
    </isoform>
    <isoform>
        <id>Q9QXS1-6</id>
        <name>PLEC-0,1C</name>
        <sequence type="described" ref="VSP_005039 VSP_005047 VSP_005048"/>
    </isoform>
    <isoform>
        <id>Q9QXS1-7</id>
        <name>PLEC-0,1C,2A</name>
        <sequence type="described" ref="VSP_005039 VSP_005047"/>
    </isoform>
    <isoform>
        <id>Q9QXS1-8</id>
        <name>PLEC-0,1C,2A,3A</name>
        <sequence type="described" ref="VSP_005039 VSP_005047 VSP_005049"/>
    </isoform>
    <isoform>
        <id>Q9QXS1-9</id>
        <name>PLEC-1D,2A</name>
        <sequence type="described" ref="VSP_005032 VSP_005041"/>
    </isoform>
    <isoform>
        <id>Q9QXS1-10</id>
        <name>PLEC-1D</name>
        <sequence type="described" ref="VSP_005032 VSP_005041 VSP_005048"/>
    </isoform>
    <isoform>
        <id>Q9QXS1-11</id>
        <name>PLEC-1E,2A</name>
        <sequence type="described" ref="VSP_005033 VSP_005042"/>
    </isoform>
    <isoform>
        <id>Q9QXS1-12</id>
        <name>PLEC-1E</name>
        <sequence type="described" ref="VSP_005033 VSP_005042 VSP_005048"/>
    </isoform>
    <isoform>
        <id>Q9QXS1-13</id>
        <name>PLEC-1F</name>
        <sequence type="described" ref="VSP_005034 VSP_005043 VSP_005048"/>
    </isoform>
    <isoform>
        <id>Q9QXS1-14</id>
        <name>PLEC-1G</name>
        <sequence type="described" ref="VSP_005038 VSP_005046 VSP_005048"/>
    </isoform>
    <isoform>
        <id>Q9QXS1-15</id>
        <name>PLEC-1H</name>
        <sequence type="described" ref="VSP_005040"/>
    </isoform>
    <isoform>
        <id>Q9QXS1-16</id>
        <name>PLEC-1I</name>
        <sequence type="described" ref="VSP_005035 VSP_005044"/>
    </isoform>
</comment>
<comment type="tissue specificity">
    <text evidence="9 15">Detected in eye lens fiber cells (at protein level) (PubMed:21745462). Expressed at high levels in lung, brain, small intestine, muscle, heart and skin with lower levels found in kidney, liver, uterus, spleen and salivary gland (PubMed:10556294).</text>
</comment>
<comment type="domain">
    <text>The N-terminus interacts with actin, the C-terminus with vimentin, desmin, GFAP, cytokeratins, lamin B; whereas both the N- and the C-terminus can bind integrin beta-4.</text>
</comment>
<comment type="PTM">
    <text>Phosphorylated by CDK1; regulates dissociation from intermediate filaments during mitosis. Isoform PLEC-1A is phosphorylated on Ser-21. Isoform PLEC-1A is phosphorylated on Tyr-26.</text>
</comment>
<comment type="similarity">
    <text evidence="18">Belongs to the plakin or cytolinker family.</text>
</comment>
<organism>
    <name type="scientific">Mus musculus</name>
    <name type="common">Mouse</name>
    <dbReference type="NCBI Taxonomy" id="10090"/>
    <lineage>
        <taxon>Eukaryota</taxon>
        <taxon>Metazoa</taxon>
        <taxon>Chordata</taxon>
        <taxon>Craniata</taxon>
        <taxon>Vertebrata</taxon>
        <taxon>Euteleostomi</taxon>
        <taxon>Mammalia</taxon>
        <taxon>Eutheria</taxon>
        <taxon>Euarchontoglires</taxon>
        <taxon>Glires</taxon>
        <taxon>Rodentia</taxon>
        <taxon>Myomorpha</taxon>
        <taxon>Muroidea</taxon>
        <taxon>Muridae</taxon>
        <taxon>Murinae</taxon>
        <taxon>Mus</taxon>
        <taxon>Mus</taxon>
    </lineage>
</organism>
<sequence>MVAGMLMPLDRLRAIYEVLFREGVMVAKKDRRPRSLHPHVPGVTNLQVMRAMASLKARGLVRETFAWCHFYWYLTNEGIDHLRQYLHLPPEIVPASLQRVRRPVAMVIPARRRSPHVQTMQGPLGCPPKRGPLPAEDPAREERQVYRRKEREEGAPETPVVSATTVGTLARPGPEPAPATDERDRVQKKTFTKWVNKHLIKHWRAEAQRHISDLYEDLRDGHNLISLLEVLSGDSLPREKGRMRFHKLQNVQIALDYLRHRQVKLVNIRNDDIADGNPKLTLGLIWTIILHFQISDIQVSGQSEDMTAKEKLLLWSQRMVEGYQGLRCDNFTTSWRDGRLFNAIIHRHKPMLIDMNKVYRQTNLENLDQAFSVAERDLGVTRLLDPEDVDVPQPDEKSIITYVSSLYDAMPRVPGAQDGVRANELQLRWQEYRELVLLLLQWIRHHTAAFEERKFPSSFEEIEILWCQFLKFKETELPAKEADKNRSKVIYQSLEGAVQAGQLKIPPGYHPLDVEKEWGKLHVAILEREKQLRSEFERLECLQRIVSKLQMEAGLCEEQLNQADALLQSDIRLLASGKVAQRAGEVERDLDKADGMIRLLFNDVQTLKDGRHPQGEQMYRRVYRLHERLVAIRTEYNLRLKAGVGAPVTQVTLQSTQRRPELEDSTLRYLQDLLAWVEENQRRIDSAEWGVDLPSVEAQLGSHRGMHQSIEEFRAKIERARNDESQLSPATRGAYRDCLGRLDLQYAKLLNSSKARLRSLESLHGFVAAATKELMWLNEKEEEEVGFDWSDRNTNMAAKKESYSALMRELEMKEKKIKEIQNTGDRLLREDHPARPTVESFQAALQTQWSWMLQLCCCIEAHLKENTAYFQFFSDVREAEEQLQKLQETLRRKYSCDRTITVTRLEDLLQDAQDEKEQLNEYKGHLSGLAKRAKAIVQLKPRNPAHPVRGHVPLIAVCDYKQVEVTVHKGDQCQLVGPAQPSHWKVLSGSSSEAAVPSVCFLVPPPNQEAQEAVARLEAQHQALVTLWHQLHVDMKSLLAWQSLSRDIQLIRSWSLVTFRTLKPEEQRQALRNLELHYQAFLRDSQDAGGFGPEDRLVAEREYGSCSRHYQQLLQSLEQGEQEESRCQRCISELKDIRLQLEACETRTVHRLRLPLDKDPARECAQRIAEQQKAQAEVEGLGKGVARLSAEAEKVLALPEPSPAAPTLRSELELTLGKLEQVRSLSAIYLEKLKTISLVIRSTQGAEEVLKTHEEQLKEAQAVPATLQELEATKASLKKLRAQAEAQQPVFNTLRDELRGAQEVGERLQQRHGERDVEVERWRERVTQLLERWQAVLAQTDVRQRELEQLGRQLRYYRESADPLSAWLQDAKRRQEQIQAVPIANCQAAREQLRQEKALLEEIERHGEKVEECQKFAKQYINAIKDYELQLITYKAQLEPVASPAKKPKVQSGSESVIQEYVDLRTRYSELTTLTSQYIKFISETLRRMEEEERLAEQQRAEERERLAEVEAALEKQRQLAEAHAQAKAQAELEAQELQRRMQEEVARREEAAVDAQQQKRSIQEELQHLRQSSEAEIQAKAQQVEAAERSRMRIEEEIRVVRLQLETTERQRGGAEGELQALRARAEEAEAQKRQAQEEAERLRRQVQDESQRKRQAEAELALRVKAEAEAAREKQRALQALDELRLQAEEAERRLRQAEAERARQVQVALETAQRSAEVELQSKRASFAEKTAQLERTLQEEHVTVAQLREEAERRAQQQAEAERAREEAERELERWQLKANEALRLRLQAEEVAQQKSLAQADAEKQKEEAEREARRRGKAEEQAVRQRELAEQELEKQRQLAEGTAQQRLAAEQELIRLRAETEQGEQQRQLLEEELARLQHEATAATQKRQELEAELAKVRAEMEVLLASKARAEEESRSTSEKSKQRLEAEAGRFRELAEEAARLRALAEEAKRQRQLAEEDAARQRAEAERVLTEKLAAISEATRLKTEAEIALKEKEAENERLRRLAEDEAFQRRRLEEQAALHKADIEERLAQLRKASESELERQKGLVEDTLRQRRQVEEEIMALKVSFEKAAAGKAELELELGRIRSNAEDTMRSKEQAELEAARQRQLAAEEEQRRREAEERVQRSLAAEEEAARQRKVALEEVERLKAKVEEARRLRERAEQESARQLQLAQEAAQKRLQAEEKAHAFVVQQREEELQQTLQQEQNMLDRLRSEAEAARRAAEEAEEAREQAEREAAQSRKQVEEAERLKQSAEEQAQAQAQAQAAAEKLRKEAEQEAARRAQAEQAALKQKQAADAEMEKHKKFAEQTLRQKAQVEQELTTLRLQLEETDHQKSILDEELQRLKAEVTEAARQRSQVEEELFSVRVQMEELGKLKARIEAENRALILRDKDNTQRFLEEEAEKMKQVAEEAARLSVAAQEAARLRQLAEEDLAQQRALAEKMLKEKMQAVQEATRLKAEAELLQQQKELAQEQARRLQEDKEQMAQQLVEETQGFQRTLEAERQRQLEMSAEAERLKLRMAEMSRAQARAEEDAQRFRKQAEEIGEKLHRTELATQEKVTLVQTLEIQRQQSDHDAERLREAIAELEREKEKLKQEAKLLQLKSEEMQTVQQEQILQETQALQKSFLSEKDSLLQRERFIEQEKAKLEQLFQDEVAKAKQLREEQQRQQQQMEQEKQELMASMEEARRRQREAEEGVRRKQEELQHLEQQRQQQEKLLAEENQRLRERLQRLEEEHRAALAHSEIATTQAASTKALPNGRDAPDGPSVEAEPEYTFEGLRQKVPAQQLQEAGILSQEELQRLAQGHTTVAELTQREDVYRYLKGRSSIAGLLLKPTNEKLSVYTALQRQLLSPGTALILLEAQAASGFLLDPVRNRRLTVNEAVKEGVVGPELHHKLLSAERAVTGYKDPYTGEQISLFQAMKKDLIVRDHGVRLLEAQIATGGIIDPVHSHRVPVDVAYKRGYFDEEMNRILSDPSDDTKGFFDPNTHENLTYLQLLERCVEDPETGLRLLPLTDKAAKGGELVYTDTEARDVFEKATVSAPFGKFQGRTVTIWEIINSEYFTAEQRRDLLQQFRTGHITVEKIIKIVITVVEEHERKGQLCFEGLRALVPAAELLDSGVISHELYQQLQRGERSVREVAEADSVRQALRGTNVIAGVWLEEAGQKLSIYEALKKDLLQPEVAVALLEAQAGTGHIIDPATSARLTVDEAVRAGLVGPELHEKLLSAEKAVTGYRDPYSGQSVSLFQALKKGLIPREQGLRLLDAQLSTGGIVDPSKSHRVPLDVAYARGYLDKETNRALTSPRDDARVYHDPSTQEPVTYSQLQQRCRSDQLTGLSLLPLSEKAVRARQEEVYSELQARETLEQAKVEVPVGSFKGRAMTVWELISSEYFTEEQRQELLRQFRTGKVTVEKVIKIVITIVEEVETRRQERLSFSGLRAPVPASELLDAKILSRAQFDQLKDGKTSVKELSEVGSVRTLLQGSGCLAGIYLEDSKEKVTIYEAMRRGLLRPSTATLLLEAQAATGFLVDPVRNQRLYVHEAVKAGVVGPELHEKLLSAEKAVTGYKDPYSGNTISLFQAMKKGLVLRDHAIRLLEAQVATGGIIDPVHSHRLPVDVAYQRGYFDEEMNRVLADPSDDTKGFFDPNTHENLTYLQLLERCVEDPETGLRLLPLKGAEKTEVVETTQVYTEEETRRAFEETQIDIPGGGSHGGSSMSLWEVMQSNMIPEDQRARLMADFQAGRVTKERMIIIIIEIIEKTEIIRQQNLASYDYVRRRLTAEDLYEARIISLETYNLFREGTKNLREVLEMESAWRYLYGTGAVAGVYLPGSRQTLTIYQALKKGLLSAEVARLLLEAQAATGFLLDPVKGERLTVDEAVRKGLVGPELHDRLLSAERAVTGYRDPYTEQTISLFQAMKKELIPAEEALRLLDAQLATGGIVDPRLGFHLPLEVAYQRGYLNKDTHDQLSEPSEVRSYVDPSTDERLSYTQLLKRCRRDDPSGQMLLLLSDARKLTFRGLRKQITVEELVRSQVMDEATALQLQEGLTSIEEVTKNLQKFLEGTSCIAGVFVDATKERLSVYQAMKKGIIRPGTAFELLEAQAATGYVIDPIKGLKLTVEEAVRMGIVGPEFKDKLLSAERAVTGYKDPYSGKLISLFQAMKKGLILKDHGIRLLEAQIATGGIIDPEESHRLPVEVAYKRGLFDEEMNEILTDPSDDTKGFFDPNTEENLTYLQLMERCITDPQTGLCLLPLKEKKRERKTSSKSSVRKRRVVIVDPETGKEMSVYEAYRKGLIDHQTYLELSEQECEWEEITISSSDGVVKSMIIDRRSGRQYDIDDAITKNLIDRSALDQYRAGTLSITEFADMLSGNAGGFRSRSSSVGSSSSYPISSAGPRTQLASWSDPTEETGPVAGILDTETLEKVSITEAMHRNLVDNITGQRLLEAQACTGGIIDPSTGERFPVTEAVNKGLVDKIMVDRINLAQKAFCGFEDPRTKTKMSAAQALKKGWLYYEAGQRFLEVQYLTGGLIEPDTPGRVSLDEALQRGTVDARTAQKLRDVSAYSKYLTCPKTKLKISYKDALDRSMVEEGTGLRLLEAAAQSSKGYYSPYSVSGSGSTAGSRTGSRTGSRAGSRRGSFDATGSGFSMTFSSSSYSSSGYGRRYASGPSASLGGPESAVA</sequence>
<dbReference type="EMBL" id="AY480033">
    <property type="protein sequence ID" value="AAR95666.1"/>
    <property type="molecule type" value="mRNA"/>
</dbReference>
<dbReference type="EMBL" id="AY480038">
    <property type="protein sequence ID" value="AAR95671.1"/>
    <property type="molecule type" value="mRNA"/>
</dbReference>
<dbReference type="EMBL" id="AY480043">
    <property type="protein sequence ID" value="AAR95676.1"/>
    <property type="molecule type" value="mRNA"/>
</dbReference>
<dbReference type="EMBL" id="AC110211">
    <property type="status" value="NOT_ANNOTATED_CDS"/>
    <property type="molecule type" value="Genomic_DNA"/>
</dbReference>
<dbReference type="EMBL" id="AF188006">
    <property type="protein sequence ID" value="AAF18066.1"/>
    <property type="molecule type" value="mRNA"/>
</dbReference>
<dbReference type="EMBL" id="AF188007">
    <property type="protein sequence ID" value="AAF18067.1"/>
    <property type="molecule type" value="mRNA"/>
</dbReference>
<dbReference type="EMBL" id="AF188008">
    <property type="protein sequence ID" value="AAF18068.1"/>
    <property type="molecule type" value="mRNA"/>
</dbReference>
<dbReference type="EMBL" id="AF188009">
    <property type="protein sequence ID" value="AAF18069.1"/>
    <property type="molecule type" value="mRNA"/>
</dbReference>
<dbReference type="EMBL" id="AF188010">
    <property type="protein sequence ID" value="AAF18070.1"/>
    <property type="molecule type" value="mRNA"/>
</dbReference>
<dbReference type="EMBL" id="AF188011">
    <property type="protein sequence ID" value="AAF18071.1"/>
    <property type="molecule type" value="mRNA"/>
</dbReference>
<dbReference type="EMBL" id="AF188012">
    <property type="protein sequence ID" value="AAF18072.1"/>
    <property type="molecule type" value="mRNA"/>
</dbReference>
<dbReference type="EMBL" id="AF188013">
    <property type="protein sequence ID" value="AAF18073.1"/>
    <property type="molecule type" value="mRNA"/>
</dbReference>
<dbReference type="EMBL" id="AF188014">
    <property type="protein sequence ID" value="AAF18074.1"/>
    <property type="molecule type" value="mRNA"/>
</dbReference>
<dbReference type="EMBL" id="AF188015">
    <property type="protein sequence ID" value="AAF18075.1"/>
    <property type="molecule type" value="mRNA"/>
</dbReference>
<dbReference type="EMBL" id="AF188016">
    <property type="protein sequence ID" value="AAF18076.1"/>
    <property type="molecule type" value="mRNA"/>
</dbReference>
<dbReference type="EMBL" id="AF188017">
    <property type="protein sequence ID" value="AAF18077.1"/>
    <property type="molecule type" value="mRNA"/>
</dbReference>
<dbReference type="EMBL" id="AF188018">
    <property type="protein sequence ID" value="AAF18078.1"/>
    <property type="molecule type" value="mRNA"/>
</dbReference>
<dbReference type="EMBL" id="AF188019">
    <property type="protein sequence ID" value="AAF18079.1"/>
    <property type="molecule type" value="mRNA"/>
</dbReference>
<dbReference type="EMBL" id="AF188020">
    <property type="protein sequence ID" value="AAF18080.1"/>
    <property type="molecule type" value="mRNA"/>
</dbReference>
<dbReference type="EMBL" id="AF188021">
    <property type="protein sequence ID" value="AAF18081.1"/>
    <property type="molecule type" value="mRNA"/>
</dbReference>
<dbReference type="EMBL" id="AF188022">
    <property type="protein sequence ID" value="AAF18082.1"/>
    <property type="molecule type" value="mRNA"/>
</dbReference>
<dbReference type="EMBL" id="AF188023">
    <property type="protein sequence ID" value="AAF18083.1"/>
    <property type="molecule type" value="mRNA"/>
</dbReference>
<dbReference type="EMBL" id="AK017743">
    <property type="status" value="NOT_ANNOTATED_CDS"/>
    <property type="molecule type" value="mRNA"/>
</dbReference>
<dbReference type="CCDS" id="CCDS37113.1">
    <molecule id="Q9QXS1-13"/>
</dbReference>
<dbReference type="CCDS" id="CCDS37114.1">
    <molecule id="Q9QXS1-2"/>
</dbReference>
<dbReference type="CCDS" id="CCDS37115.1">
    <molecule id="Q9QXS1-14"/>
</dbReference>
<dbReference type="CCDS" id="CCDS37116.1">
    <molecule id="Q9QXS1-3"/>
</dbReference>
<dbReference type="CCDS" id="CCDS49644.1">
    <molecule id="Q9QXS1-5"/>
</dbReference>
<dbReference type="CCDS" id="CCDS49645.1">
    <molecule id="Q9QXS1-4"/>
</dbReference>
<dbReference type="CCDS" id="CCDS49646.1">
    <molecule id="Q9QXS1-10"/>
</dbReference>
<dbReference type="CCDS" id="CCDS49647.1">
    <molecule id="Q9QXS1-1"/>
</dbReference>
<dbReference type="CCDS" id="CCDS49648.1">
    <molecule id="Q9QXS1-12"/>
</dbReference>
<dbReference type="CCDS" id="CCDS49649.1">
    <molecule id="Q9QXS1-8"/>
</dbReference>
<dbReference type="PIR" id="D59404">
    <property type="entry name" value="D59404"/>
</dbReference>
<dbReference type="RefSeq" id="NP_001157012.1">
    <molecule id="Q9QXS1-1"/>
    <property type="nucleotide sequence ID" value="NM_001163540.1"/>
</dbReference>
<dbReference type="RefSeq" id="NP_001157014.1">
    <molecule id="Q9QXS1-8"/>
    <property type="nucleotide sequence ID" value="NM_001163542.1"/>
</dbReference>
<dbReference type="RefSeq" id="NP_001157021.1">
    <molecule id="Q9QXS1-4"/>
    <property type="nucleotide sequence ID" value="NM_001163549.1"/>
</dbReference>
<dbReference type="RefSeq" id="NP_001157675.1">
    <property type="nucleotide sequence ID" value="NM_001164203.1"/>
</dbReference>
<dbReference type="RefSeq" id="NP_035247.2">
    <molecule id="Q9QXS1-6"/>
    <property type="nucleotide sequence ID" value="NM_011117.2"/>
</dbReference>
<dbReference type="RefSeq" id="NP_958787.2">
    <molecule id="Q9QXS1-13"/>
    <property type="nucleotide sequence ID" value="NM_201385.2"/>
</dbReference>
<dbReference type="RefSeq" id="NP_958788.2">
    <molecule id="Q9QXS1-12"/>
    <property type="nucleotide sequence ID" value="NM_201386.2"/>
</dbReference>
<dbReference type="RefSeq" id="NP_958791.2">
    <molecule id="Q9QXS1-2"/>
    <property type="nucleotide sequence ID" value="NM_201389.2"/>
</dbReference>
<dbReference type="RefSeq" id="NP_958792.2">
    <molecule id="Q9QXS1-10"/>
    <property type="nucleotide sequence ID" value="NM_201390.2"/>
</dbReference>
<dbReference type="RefSeq" id="NP_958793.2">
    <molecule id="Q9QXS1-5"/>
    <property type="nucleotide sequence ID" value="NM_201391.2"/>
</dbReference>
<dbReference type="RefSeq" id="NP_958795.2">
    <molecule id="Q9QXS1-14"/>
    <property type="nucleotide sequence ID" value="NM_201393.2"/>
</dbReference>
<dbReference type="RefSeq" id="NP_958796.2">
    <molecule id="Q9QXS1-3"/>
    <property type="nucleotide sequence ID" value="NM_201394.2"/>
</dbReference>
<dbReference type="PDB" id="1SH5">
    <property type="method" value="X-ray"/>
    <property type="resolution" value="2.00 A"/>
    <property type="chains" value="A/B=181-417"/>
</dbReference>
<dbReference type="PDB" id="1SH6">
    <property type="method" value="X-ray"/>
    <property type="resolution" value="2.00 A"/>
    <property type="chains" value="A=181-417"/>
</dbReference>
<dbReference type="PDB" id="4Q57">
    <property type="method" value="X-ray"/>
    <property type="resolution" value="1.80 A"/>
    <property type="chains" value="B=181-411"/>
</dbReference>
<dbReference type="PDBsum" id="1SH5"/>
<dbReference type="PDBsum" id="1SH6"/>
<dbReference type="PDBsum" id="4Q57"/>
<dbReference type="SMR" id="Q9QXS1"/>
<dbReference type="BioGRID" id="202243">
    <property type="interactions" value="40"/>
</dbReference>
<dbReference type="CORUM" id="Q9QXS1"/>
<dbReference type="DIP" id="DIP-32004N"/>
<dbReference type="FunCoup" id="Q9QXS1">
    <property type="interactions" value="640"/>
</dbReference>
<dbReference type="IntAct" id="Q9QXS1">
    <property type="interactions" value="16"/>
</dbReference>
<dbReference type="MINT" id="Q9QXS1"/>
<dbReference type="STRING" id="10090.ENSMUSP00000073124"/>
<dbReference type="GlyGen" id="Q9QXS1">
    <property type="glycosylation" value="6 sites, 2 N-linked glycans (2 sites), 1 O-linked glycan (4 sites)"/>
</dbReference>
<dbReference type="iPTMnet" id="Q9QXS1"/>
<dbReference type="PhosphoSitePlus" id="Q9QXS1"/>
<dbReference type="SwissPalm" id="Q9QXS1"/>
<dbReference type="jPOST" id="Q9QXS1"/>
<dbReference type="PaxDb" id="10090-ENSMUSP00000075772"/>
<dbReference type="PeptideAtlas" id="Q9QXS1"/>
<dbReference type="ProteomicsDB" id="288234">
    <molecule id="Q9QXS1-1"/>
</dbReference>
<dbReference type="ProteomicsDB" id="288235">
    <molecule id="Q9QXS1-2"/>
</dbReference>
<dbReference type="ProteomicsDB" id="288236">
    <molecule id="Q9QXS1-3"/>
</dbReference>
<dbReference type="ProteomicsDB" id="288237">
    <molecule id="Q9QXS1-4"/>
</dbReference>
<dbReference type="ProteomicsDB" id="288238">
    <molecule id="Q9QXS1-5"/>
</dbReference>
<dbReference type="ProteomicsDB" id="288239">
    <molecule id="Q9QXS1-6"/>
</dbReference>
<dbReference type="ProteomicsDB" id="288240">
    <molecule id="Q9QXS1-7"/>
</dbReference>
<dbReference type="ProteomicsDB" id="288241">
    <molecule id="Q9QXS1-8"/>
</dbReference>
<dbReference type="ProteomicsDB" id="288242">
    <molecule id="Q9QXS1-9"/>
</dbReference>
<dbReference type="ProteomicsDB" id="288243">
    <molecule id="Q9QXS1-10"/>
</dbReference>
<dbReference type="ProteomicsDB" id="288244">
    <molecule id="Q9QXS1-11"/>
</dbReference>
<dbReference type="ProteomicsDB" id="288245">
    <molecule id="Q9QXS1-12"/>
</dbReference>
<dbReference type="ProteomicsDB" id="288246">
    <molecule id="Q9QXS1-13"/>
</dbReference>
<dbReference type="ProteomicsDB" id="288247">
    <molecule id="Q9QXS1-14"/>
</dbReference>
<dbReference type="ProteomicsDB" id="288248">
    <molecule id="Q9QXS1-15"/>
</dbReference>
<dbReference type="ProteomicsDB" id="288249">
    <molecule id="Q9QXS1-16"/>
</dbReference>
<dbReference type="Pumba" id="Q9QXS1"/>
<dbReference type="Antibodypedia" id="3549">
    <property type="antibodies" value="211 antibodies from 33 providers"/>
</dbReference>
<dbReference type="DNASU" id="18810"/>
<dbReference type="Ensembl" id="ENSMUST00000023226.13">
    <molecule id="Q9QXS1-3"/>
    <property type="protein sequence ID" value="ENSMUSP00000023226.7"/>
    <property type="gene ID" value="ENSMUSG00000022565.16"/>
</dbReference>
<dbReference type="Ensembl" id="ENSMUST00000054449.14">
    <molecule id="Q9QXS1-4"/>
    <property type="protein sequence ID" value="ENSMUSP00000057158.8"/>
    <property type="gene ID" value="ENSMUSG00000022565.16"/>
</dbReference>
<dbReference type="Ensembl" id="ENSMUST00000071869.12">
    <molecule id="Q9QXS1-12"/>
    <property type="protein sequence ID" value="ENSMUSP00000071765.6"/>
    <property type="gene ID" value="ENSMUSG00000022565.16"/>
</dbReference>
<dbReference type="Ensembl" id="ENSMUST00000072692.11">
    <molecule id="Q9QXS1-14"/>
    <property type="protein sequence ID" value="ENSMUSP00000072478.5"/>
    <property type="gene ID" value="ENSMUSG00000022565.16"/>
</dbReference>
<dbReference type="Ensembl" id="ENSMUST00000073418.13">
    <molecule id="Q9QXS1-1"/>
    <property type="protein sequence ID" value="ENSMUSP00000073124.7"/>
    <property type="gene ID" value="ENSMUSG00000022565.16"/>
</dbReference>
<dbReference type="Ensembl" id="ENSMUST00000074834.12">
    <molecule id="Q9QXS1-13"/>
    <property type="protein sequence ID" value="ENSMUSP00000074383.6"/>
    <property type="gene ID" value="ENSMUSG00000022565.16"/>
</dbReference>
<dbReference type="Ensembl" id="ENSMUST00000076442.12">
    <molecule id="Q9QXS1-2"/>
    <property type="protein sequence ID" value="ENSMUSP00000075772.6"/>
    <property type="gene ID" value="ENSMUSG00000022565.16"/>
</dbReference>
<dbReference type="Ensembl" id="ENSMUST00000089610.10">
    <molecule id="Q9QXS1-8"/>
    <property type="protein sequence ID" value="ENSMUSP00000087037.4"/>
    <property type="gene ID" value="ENSMUSG00000022565.16"/>
</dbReference>
<dbReference type="Ensembl" id="ENSMUST00000169108.8">
    <molecule id="Q9QXS1-10"/>
    <property type="protein sequence ID" value="ENSMUSP00000126068.2"/>
    <property type="gene ID" value="ENSMUSG00000022565.16"/>
</dbReference>
<dbReference type="Ensembl" id="ENSMUST00000169714.8">
    <molecule id="Q9QXS1-5"/>
    <property type="protein sequence ID" value="ENSMUSP00000126526.2"/>
    <property type="gene ID" value="ENSMUSG00000022565.16"/>
</dbReference>
<dbReference type="GeneID" id="18810"/>
<dbReference type="KEGG" id="mmu:18810"/>
<dbReference type="UCSC" id="uc007wir.2">
    <molecule id="Q9QXS1-3"/>
    <property type="organism name" value="mouse"/>
</dbReference>
<dbReference type="UCSC" id="uc007wis.2">
    <molecule id="Q9QXS1-14"/>
    <property type="organism name" value="mouse"/>
</dbReference>
<dbReference type="UCSC" id="uc007wit.2">
    <molecule id="Q9QXS1-1"/>
    <property type="organism name" value="mouse"/>
</dbReference>
<dbReference type="UCSC" id="uc007wiu.2">
    <molecule id="Q9QXS1-5"/>
    <property type="organism name" value="mouse"/>
</dbReference>
<dbReference type="UCSC" id="uc007wiv.2">
    <molecule id="Q9QXS1-10"/>
    <property type="organism name" value="mouse"/>
</dbReference>
<dbReference type="UCSC" id="uc007wiw.2">
    <molecule id="Q9QXS1-2"/>
    <property type="organism name" value="mouse"/>
</dbReference>
<dbReference type="UCSC" id="uc007wiz.2">
    <molecule id="Q9QXS1-12"/>
    <property type="organism name" value="mouse"/>
</dbReference>
<dbReference type="UCSC" id="uc007wja.2">
    <molecule id="Q9QXS1-13"/>
    <property type="organism name" value="mouse"/>
</dbReference>
<dbReference type="UCSC" id="uc007wjb.2">
    <molecule id="Q9QXS1-6"/>
    <property type="organism name" value="mouse"/>
</dbReference>
<dbReference type="UCSC" id="uc007wjd.2">
    <molecule id="Q9QXS1-4"/>
    <property type="organism name" value="mouse"/>
</dbReference>
<dbReference type="UCSC" id="uc011zuq.1">
    <molecule id="Q9QXS1-8"/>
    <property type="organism name" value="mouse"/>
</dbReference>
<dbReference type="AGR" id="MGI:1277961"/>
<dbReference type="CTD" id="5339"/>
<dbReference type="MGI" id="MGI:1277961">
    <property type="gene designation" value="Plec"/>
</dbReference>
<dbReference type="VEuPathDB" id="HostDB:ENSMUSG00000022565"/>
<dbReference type="eggNOG" id="KOG0516">
    <property type="taxonomic scope" value="Eukaryota"/>
</dbReference>
<dbReference type="eggNOG" id="KOG3344">
    <property type="taxonomic scope" value="Eukaryota"/>
</dbReference>
<dbReference type="GeneTree" id="ENSGT00940000159045"/>
<dbReference type="HOGENOM" id="CLU_000132_0_0_1"/>
<dbReference type="InParanoid" id="Q9QXS1"/>
<dbReference type="OMA" id="EERWVYR"/>
<dbReference type="OrthoDB" id="8919664at2759"/>
<dbReference type="PhylomeDB" id="Q9QXS1"/>
<dbReference type="Reactome" id="R-MMU-264870">
    <property type="pathway name" value="Caspase-mediated cleavage of cytoskeletal proteins"/>
</dbReference>
<dbReference type="Reactome" id="R-MMU-446107">
    <property type="pathway name" value="Type I hemidesmosome assembly"/>
</dbReference>
<dbReference type="BioGRID-ORCS" id="18810">
    <property type="hits" value="5 hits in 79 CRISPR screens"/>
</dbReference>
<dbReference type="CD-CODE" id="CE726F99">
    <property type="entry name" value="Postsynaptic density"/>
</dbReference>
<dbReference type="ChiTaRS" id="Plec">
    <property type="organism name" value="mouse"/>
</dbReference>
<dbReference type="EvolutionaryTrace" id="Q9QXS1"/>
<dbReference type="PRO" id="PR:Q9QXS1"/>
<dbReference type="Proteomes" id="UP000000589">
    <property type="component" value="Chromosome 15"/>
</dbReference>
<dbReference type="RNAct" id="Q9QXS1">
    <property type="molecule type" value="protein"/>
</dbReference>
<dbReference type="Bgee" id="ENSMUSG00000022565">
    <property type="expression patterns" value="Expressed in tarsal region and 245 other cell types or tissues"/>
</dbReference>
<dbReference type="ExpressionAtlas" id="Q9QXS1">
    <property type="expression patterns" value="baseline and differential"/>
</dbReference>
<dbReference type="GO" id="GO:0030424">
    <property type="term" value="C:axon"/>
    <property type="evidence" value="ECO:0000314"/>
    <property type="project" value="MGI"/>
</dbReference>
<dbReference type="GO" id="GO:0005903">
    <property type="term" value="C:brush border"/>
    <property type="evidence" value="ECO:0000314"/>
    <property type="project" value="UniProtKB"/>
</dbReference>
<dbReference type="GO" id="GO:0071944">
    <property type="term" value="C:cell periphery"/>
    <property type="evidence" value="ECO:0000314"/>
    <property type="project" value="MGI"/>
</dbReference>
<dbReference type="GO" id="GO:0043292">
    <property type="term" value="C:contractile muscle fiber"/>
    <property type="evidence" value="ECO:0000314"/>
    <property type="project" value="MGI"/>
</dbReference>
<dbReference type="GO" id="GO:0005737">
    <property type="term" value="C:cytoplasm"/>
    <property type="evidence" value="ECO:0000314"/>
    <property type="project" value="MGI"/>
</dbReference>
<dbReference type="GO" id="GO:0005829">
    <property type="term" value="C:cytosol"/>
    <property type="evidence" value="ECO:0007669"/>
    <property type="project" value="Ensembl"/>
</dbReference>
<dbReference type="GO" id="GO:0030425">
    <property type="term" value="C:dendrite"/>
    <property type="evidence" value="ECO:0000314"/>
    <property type="project" value="MGI"/>
</dbReference>
<dbReference type="GO" id="GO:0005925">
    <property type="term" value="C:focal adhesion"/>
    <property type="evidence" value="ECO:0007669"/>
    <property type="project" value="Ensembl"/>
</dbReference>
<dbReference type="GO" id="GO:0030056">
    <property type="term" value="C:hemidesmosome"/>
    <property type="evidence" value="ECO:0000314"/>
    <property type="project" value="MGI"/>
</dbReference>
<dbReference type="GO" id="GO:0045111">
    <property type="term" value="C:intermediate filament cytoskeleton"/>
    <property type="evidence" value="ECO:0007669"/>
    <property type="project" value="Ensembl"/>
</dbReference>
<dbReference type="GO" id="GO:0005741">
    <property type="term" value="C:mitochondrial outer membrane"/>
    <property type="evidence" value="ECO:0000315"/>
    <property type="project" value="MGI"/>
</dbReference>
<dbReference type="GO" id="GO:0043209">
    <property type="term" value="C:myelin sheath"/>
    <property type="evidence" value="ECO:0000314"/>
    <property type="project" value="MGI"/>
</dbReference>
<dbReference type="GO" id="GO:0030016">
    <property type="term" value="C:myofibril"/>
    <property type="evidence" value="ECO:0000314"/>
    <property type="project" value="MGI"/>
</dbReference>
<dbReference type="GO" id="GO:0002102">
    <property type="term" value="C:podosome"/>
    <property type="evidence" value="ECO:0000314"/>
    <property type="project" value="UniProtKB"/>
</dbReference>
<dbReference type="GO" id="GO:0042383">
    <property type="term" value="C:sarcolemma"/>
    <property type="evidence" value="ECO:0000314"/>
    <property type="project" value="MGI"/>
</dbReference>
<dbReference type="GO" id="GO:0030018">
    <property type="term" value="C:Z disc"/>
    <property type="evidence" value="ECO:0000314"/>
    <property type="project" value="MGI"/>
</dbReference>
<dbReference type="GO" id="GO:0003779">
    <property type="term" value="F:actin binding"/>
    <property type="evidence" value="ECO:0000314"/>
    <property type="project" value="MGI"/>
</dbReference>
<dbReference type="GO" id="GO:0051015">
    <property type="term" value="F:actin filament binding"/>
    <property type="evidence" value="ECO:0000314"/>
    <property type="project" value="MGI"/>
</dbReference>
<dbReference type="GO" id="GO:0030506">
    <property type="term" value="F:ankyrin binding"/>
    <property type="evidence" value="ECO:0007669"/>
    <property type="project" value="Ensembl"/>
</dbReference>
<dbReference type="GO" id="GO:0002162">
    <property type="term" value="F:dystroglycan binding"/>
    <property type="evidence" value="ECO:0000314"/>
    <property type="project" value="MGI"/>
</dbReference>
<dbReference type="GO" id="GO:0042802">
    <property type="term" value="F:identical protein binding"/>
    <property type="evidence" value="ECO:0000314"/>
    <property type="project" value="MGI"/>
</dbReference>
<dbReference type="GO" id="GO:0030036">
    <property type="term" value="P:actin cytoskeleton organization"/>
    <property type="evidence" value="ECO:0000315"/>
    <property type="project" value="MGI"/>
</dbReference>
<dbReference type="GO" id="GO:0007015">
    <property type="term" value="P:actin filament organization"/>
    <property type="evidence" value="ECO:0000315"/>
    <property type="project" value="MGI"/>
</dbReference>
<dbReference type="GO" id="GO:2000689">
    <property type="term" value="P:actomyosin contractile ring assembly actin filament organization"/>
    <property type="evidence" value="ECO:0000315"/>
    <property type="project" value="MGI"/>
</dbReference>
<dbReference type="GO" id="GO:0034332">
    <property type="term" value="P:adherens junction organization"/>
    <property type="evidence" value="ECO:0000315"/>
    <property type="project" value="MGI"/>
</dbReference>
<dbReference type="GO" id="GO:0055013">
    <property type="term" value="P:cardiac muscle cell development"/>
    <property type="evidence" value="ECO:0000315"/>
    <property type="project" value="MGI"/>
</dbReference>
<dbReference type="GO" id="GO:0000902">
    <property type="term" value="P:cell morphogenesis"/>
    <property type="evidence" value="ECO:0000315"/>
    <property type="project" value="MGI"/>
</dbReference>
<dbReference type="GO" id="GO:0048870">
    <property type="term" value="P:cell motility"/>
    <property type="evidence" value="ECO:0000315"/>
    <property type="project" value="MGI"/>
</dbReference>
<dbReference type="GO" id="GO:0071498">
    <property type="term" value="P:cellular response to fluid shear stress"/>
    <property type="evidence" value="ECO:0000315"/>
    <property type="project" value="MGI"/>
</dbReference>
<dbReference type="GO" id="GO:0071464">
    <property type="term" value="P:cellular response to hydrostatic pressure"/>
    <property type="evidence" value="ECO:0000315"/>
    <property type="project" value="MGI"/>
</dbReference>
<dbReference type="GO" id="GO:0071260">
    <property type="term" value="P:cellular response to mechanical stimulus"/>
    <property type="evidence" value="ECO:0000315"/>
    <property type="project" value="MGI"/>
</dbReference>
<dbReference type="GO" id="GO:0061436">
    <property type="term" value="P:establishment of skin barrier"/>
    <property type="evidence" value="ECO:0000315"/>
    <property type="project" value="MGI"/>
</dbReference>
<dbReference type="GO" id="GO:0010761">
    <property type="term" value="P:fibroblast migration"/>
    <property type="evidence" value="ECO:0000315"/>
    <property type="project" value="MGI"/>
</dbReference>
<dbReference type="GO" id="GO:0010467">
    <property type="term" value="P:gene expression"/>
    <property type="evidence" value="ECO:0000315"/>
    <property type="project" value="MGI"/>
</dbReference>
<dbReference type="GO" id="GO:0031581">
    <property type="term" value="P:hemidesmosome assembly"/>
    <property type="evidence" value="ECO:0000250"/>
    <property type="project" value="UniProtKB"/>
</dbReference>
<dbReference type="GO" id="GO:0045104">
    <property type="term" value="P:intermediate filament cytoskeleton organization"/>
    <property type="evidence" value="ECO:0000315"/>
    <property type="project" value="MGI"/>
</dbReference>
<dbReference type="GO" id="GO:0045109">
    <property type="term" value="P:intermediate filament organization"/>
    <property type="evidence" value="ECO:0000315"/>
    <property type="project" value="MGI"/>
</dbReference>
<dbReference type="GO" id="GO:0003334">
    <property type="term" value="P:keratinocyte development"/>
    <property type="evidence" value="ECO:0000315"/>
    <property type="project" value="MGI"/>
</dbReference>
<dbReference type="GO" id="GO:0030216">
    <property type="term" value="P:keratinocyte differentiation"/>
    <property type="evidence" value="ECO:0000315"/>
    <property type="project" value="MGI"/>
</dbReference>
<dbReference type="GO" id="GO:0002522">
    <property type="term" value="P:leukocyte migration involved in immune response"/>
    <property type="evidence" value="ECO:0000315"/>
    <property type="project" value="MGI"/>
</dbReference>
<dbReference type="GO" id="GO:0007005">
    <property type="term" value="P:mitochondrion organization"/>
    <property type="evidence" value="ECO:0000315"/>
    <property type="project" value="MGI"/>
</dbReference>
<dbReference type="GO" id="GO:0035264">
    <property type="term" value="P:multicellular organism growth"/>
    <property type="evidence" value="ECO:0000315"/>
    <property type="project" value="MGI"/>
</dbReference>
<dbReference type="GO" id="GO:0022011">
    <property type="term" value="P:myelination in peripheral nervous system"/>
    <property type="evidence" value="ECO:0000315"/>
    <property type="project" value="MGI"/>
</dbReference>
<dbReference type="GO" id="GO:0045445">
    <property type="term" value="P:myoblast differentiation"/>
    <property type="evidence" value="ECO:0000315"/>
    <property type="project" value="MGI"/>
</dbReference>
<dbReference type="GO" id="GO:0006997">
    <property type="term" value="P:nucleus organization"/>
    <property type="evidence" value="ECO:0000315"/>
    <property type="project" value="MGI"/>
</dbReference>
<dbReference type="GO" id="GO:0032287">
    <property type="term" value="P:peripheral nervous system myelin maintenance"/>
    <property type="evidence" value="ECO:0000315"/>
    <property type="project" value="MGI"/>
</dbReference>
<dbReference type="GO" id="GO:0008104">
    <property type="term" value="P:protein localization"/>
    <property type="evidence" value="ECO:0000315"/>
    <property type="project" value="MGI"/>
</dbReference>
<dbReference type="GO" id="GO:0043933">
    <property type="term" value="P:protein-containing complex organization"/>
    <property type="evidence" value="ECO:0000315"/>
    <property type="project" value="MGI"/>
</dbReference>
<dbReference type="GO" id="GO:0043114">
    <property type="term" value="P:regulation of vascular permeability"/>
    <property type="evidence" value="ECO:0000315"/>
    <property type="project" value="MGI"/>
</dbReference>
<dbReference type="GO" id="GO:0022904">
    <property type="term" value="P:respiratory electron transport chain"/>
    <property type="evidence" value="ECO:0000315"/>
    <property type="project" value="MGI"/>
</dbReference>
<dbReference type="GO" id="GO:0032094">
    <property type="term" value="P:response to food"/>
    <property type="evidence" value="ECO:0000315"/>
    <property type="project" value="MGI"/>
</dbReference>
<dbReference type="GO" id="GO:0045214">
    <property type="term" value="P:sarcomere organization"/>
    <property type="evidence" value="ECO:0000315"/>
    <property type="project" value="MGI"/>
</dbReference>
<dbReference type="GO" id="GO:0048741">
    <property type="term" value="P:skeletal muscle fiber development"/>
    <property type="evidence" value="ECO:0000315"/>
    <property type="project" value="MGI"/>
</dbReference>
<dbReference type="GO" id="GO:0007519">
    <property type="term" value="P:skeletal muscle tissue development"/>
    <property type="evidence" value="ECO:0000315"/>
    <property type="project" value="MGI"/>
</dbReference>
<dbReference type="GO" id="GO:0014866">
    <property type="term" value="P:skeletal myofibril assembly"/>
    <property type="evidence" value="ECO:0000315"/>
    <property type="project" value="MGI"/>
</dbReference>
<dbReference type="GO" id="GO:0043588">
    <property type="term" value="P:skin development"/>
    <property type="evidence" value="ECO:0000315"/>
    <property type="project" value="MGI"/>
</dbReference>
<dbReference type="GO" id="GO:0010818">
    <property type="term" value="P:T cell chemotaxis"/>
    <property type="evidence" value="ECO:0000315"/>
    <property type="project" value="MGI"/>
</dbReference>
<dbReference type="GO" id="GO:0120193">
    <property type="term" value="P:tight junction organization"/>
    <property type="evidence" value="ECO:0000315"/>
    <property type="project" value="MGI"/>
</dbReference>
<dbReference type="GO" id="GO:0019226">
    <property type="term" value="P:transmission of nerve impulse"/>
    <property type="evidence" value="ECO:0000315"/>
    <property type="project" value="MGI"/>
</dbReference>
<dbReference type="CDD" id="cd21188">
    <property type="entry name" value="CH_PLEC-like_rpt1"/>
    <property type="match status" value="1"/>
</dbReference>
<dbReference type="CDD" id="cd21238">
    <property type="entry name" value="CH_PLEC_rpt2"/>
    <property type="match status" value="1"/>
</dbReference>
<dbReference type="CDD" id="cd00176">
    <property type="entry name" value="SPEC"/>
    <property type="match status" value="2"/>
</dbReference>
<dbReference type="FunFam" id="1.20.58.60:FF:000009">
    <property type="entry name" value="dystonin isoform X1"/>
    <property type="match status" value="1"/>
</dbReference>
<dbReference type="FunFam" id="1.10.418.10:FF:000002">
    <property type="entry name" value="Microtubule-actin cross-linking factor 1"/>
    <property type="match status" value="1"/>
</dbReference>
<dbReference type="FunFam" id="1.20.58.60:FF:000036">
    <property type="entry name" value="Plectin a"/>
    <property type="match status" value="1"/>
</dbReference>
<dbReference type="FunFam" id="1.20.58.60:FF:000076">
    <property type="entry name" value="Plectin a"/>
    <property type="match status" value="1"/>
</dbReference>
<dbReference type="FunFam" id="2.30.30.40:FF:000064">
    <property type="entry name" value="Plectin a"/>
    <property type="match status" value="1"/>
</dbReference>
<dbReference type="FunFam" id="3.30.160.780:FF:000001">
    <property type="entry name" value="Plectin a"/>
    <property type="match status" value="1"/>
</dbReference>
<dbReference type="FunFam" id="3.90.1290.10:FF:000001">
    <property type="entry name" value="Plectin a"/>
    <property type="match status" value="5"/>
</dbReference>
<dbReference type="FunFam" id="3.90.1290.10:FF:000002">
    <property type="entry name" value="Plectin a"/>
    <property type="match status" value="1"/>
</dbReference>
<dbReference type="FunFam" id="1.10.10.10:FF:000388">
    <property type="entry name" value="plectin isoform X1"/>
    <property type="match status" value="1"/>
</dbReference>
<dbReference type="FunFam" id="1.20.58.60:FF:000065">
    <property type="entry name" value="plectin isoform X1"/>
    <property type="match status" value="1"/>
</dbReference>
<dbReference type="FunFam" id="1.10.418.10:FF:000029">
    <property type="entry name" value="plectin isoform X2"/>
    <property type="match status" value="1"/>
</dbReference>
<dbReference type="FunFam" id="1.20.58.60:FF:000010">
    <property type="entry name" value="plectin isoform X2"/>
    <property type="match status" value="1"/>
</dbReference>
<dbReference type="Gene3D" id="1.20.58.1060">
    <property type="match status" value="1"/>
</dbReference>
<dbReference type="Gene3D" id="1.20.58.60">
    <property type="match status" value="5"/>
</dbReference>
<dbReference type="Gene3D" id="3.30.160.780">
    <property type="match status" value="1"/>
</dbReference>
<dbReference type="Gene3D" id="1.10.418.10">
    <property type="entry name" value="Calponin-like domain"/>
    <property type="match status" value="2"/>
</dbReference>
<dbReference type="Gene3D" id="3.90.1290.10">
    <property type="entry name" value="Plakin repeat"/>
    <property type="match status" value="6"/>
</dbReference>
<dbReference type="Gene3D" id="2.30.30.40">
    <property type="entry name" value="SH3 Domains"/>
    <property type="match status" value="1"/>
</dbReference>
<dbReference type="Gene3D" id="1.10.10.10">
    <property type="entry name" value="Winged helix-like DNA-binding domain superfamily/Winged helix DNA-binding domain"/>
    <property type="match status" value="1"/>
</dbReference>
<dbReference type="InterPro" id="IPR001589">
    <property type="entry name" value="Actinin_actin-bd_CS"/>
</dbReference>
<dbReference type="InterPro" id="IPR001715">
    <property type="entry name" value="CH_dom"/>
</dbReference>
<dbReference type="InterPro" id="IPR036872">
    <property type="entry name" value="CH_dom_sf"/>
</dbReference>
<dbReference type="InterPro" id="IPR041615">
    <property type="entry name" value="Desmoplakin_SH3"/>
</dbReference>
<dbReference type="InterPro" id="IPR041573">
    <property type="entry name" value="Desmoplakin_Spectrin-like"/>
</dbReference>
<dbReference type="InterPro" id="IPR049538">
    <property type="entry name" value="PCN-like_spectrin-like_rpt"/>
</dbReference>
<dbReference type="InterPro" id="IPR043197">
    <property type="entry name" value="Plakin"/>
</dbReference>
<dbReference type="InterPro" id="IPR035915">
    <property type="entry name" value="Plakin_repeat_sf"/>
</dbReference>
<dbReference type="InterPro" id="IPR005326">
    <property type="entry name" value="Plectin_eS10_N"/>
</dbReference>
<dbReference type="InterPro" id="IPR001101">
    <property type="entry name" value="Plectin_repeat"/>
</dbReference>
<dbReference type="InterPro" id="IPR001452">
    <property type="entry name" value="SH3_domain"/>
</dbReference>
<dbReference type="InterPro" id="IPR018159">
    <property type="entry name" value="Spectrin/alpha-actinin"/>
</dbReference>
<dbReference type="InterPro" id="IPR036388">
    <property type="entry name" value="WH-like_DNA-bd_sf"/>
</dbReference>
<dbReference type="PANTHER" id="PTHR23169">
    <property type="entry name" value="ENVOPLAKIN"/>
    <property type="match status" value="1"/>
</dbReference>
<dbReference type="PANTHER" id="PTHR23169:SF21">
    <property type="entry name" value="EPIPLAKIN"/>
    <property type="match status" value="1"/>
</dbReference>
<dbReference type="Pfam" id="PF00307">
    <property type="entry name" value="CH"/>
    <property type="match status" value="2"/>
</dbReference>
<dbReference type="Pfam" id="PF00681">
    <property type="entry name" value="Plectin"/>
    <property type="match status" value="19"/>
</dbReference>
<dbReference type="Pfam" id="PF03501">
    <property type="entry name" value="S10_plectin"/>
    <property type="match status" value="1"/>
</dbReference>
<dbReference type="Pfam" id="PF17902">
    <property type="entry name" value="SH3_10"/>
    <property type="match status" value="1"/>
</dbReference>
<dbReference type="Pfam" id="PF18373">
    <property type="entry name" value="Spectrin_2"/>
    <property type="match status" value="1"/>
</dbReference>
<dbReference type="Pfam" id="PF21019">
    <property type="entry name" value="Spectrin_3"/>
    <property type="match status" value="1"/>
</dbReference>
<dbReference type="Pfam" id="PF21020">
    <property type="entry name" value="Spectrin_4"/>
    <property type="match status" value="1"/>
</dbReference>
<dbReference type="Pfam" id="PF21097">
    <property type="entry name" value="SR_plectin_7"/>
    <property type="match status" value="1"/>
</dbReference>
<dbReference type="SMART" id="SM00033">
    <property type="entry name" value="CH"/>
    <property type="match status" value="2"/>
</dbReference>
<dbReference type="SMART" id="SM00250">
    <property type="entry name" value="PLEC"/>
    <property type="match status" value="35"/>
</dbReference>
<dbReference type="SMART" id="SM00150">
    <property type="entry name" value="SPEC"/>
    <property type="match status" value="6"/>
</dbReference>
<dbReference type="SUPFAM" id="SSF47576">
    <property type="entry name" value="Calponin-homology domain, CH-domain"/>
    <property type="match status" value="1"/>
</dbReference>
<dbReference type="SUPFAM" id="SSF75399">
    <property type="entry name" value="Plakin repeat"/>
    <property type="match status" value="7"/>
</dbReference>
<dbReference type="SUPFAM" id="SSF46966">
    <property type="entry name" value="Spectrin repeat"/>
    <property type="match status" value="4"/>
</dbReference>
<dbReference type="PROSITE" id="PS00019">
    <property type="entry name" value="ACTININ_1"/>
    <property type="match status" value="1"/>
</dbReference>
<dbReference type="PROSITE" id="PS00020">
    <property type="entry name" value="ACTININ_2"/>
    <property type="match status" value="1"/>
</dbReference>
<dbReference type="PROSITE" id="PS50021">
    <property type="entry name" value="CH"/>
    <property type="match status" value="2"/>
</dbReference>
<dbReference type="PROSITE" id="PS50002">
    <property type="entry name" value="SH3"/>
    <property type="match status" value="1"/>
</dbReference>